<accession>P25788</accession>
<accession>B2RCK6</accession>
<accession>Q86U83</accession>
<accession>Q8N1D8</accession>
<accession>Q9BS70</accession>
<comment type="function">
    <text evidence="2 7 9 14 20">Component of the 20S core proteasome complex involved in the proteolytic degradation of most intracellular proteins. This complex plays numerous essential roles within the cell by associating with different regulatory particles. Associated with two 19S regulatory particles, forms the 26S proteasome and thus participates in the ATP-dependent degradation of ubiquitinated proteins. The 26S proteasome plays a key role in the maintenance of protein homeostasis by removing misfolded or damaged proteins that could impair cellular functions, and by removing proteins whose functions are no longer required. Associated with the PA200 or PA28, the 20S proteasome mediates ubiquitin-independent protein degradation. This type of proteolysis is required in several pathways including spermatogenesis (20S-PA200 complex) or generation of a subset of MHC class I-presented antigenic peptides (20S-PA28 complex). Binds to the C-terminus of CDKN1A and thereby mediates its degradation. Negatively regulates the membrane trafficking of the cell-surface thromboxane A2 receptor (TBXA2R) isoform 2.</text>
</comment>
<comment type="subunit">
    <text evidence="2 8 11 13 14 16 17 19 21 22 23 24">The 26S proteasome consists of a 20S proteasome core and two 19S regulatory subunits (PubMed:25599644, PubMed:26133119, PubMed:26657688, PubMed:27342858, PubMed:27428775, PubMed:27493187, PubMed:34711951). The 20S proteasome core is a barrel-shaped complex made of 28 subunits that are arranged in four stacked rings (PubMed:25599644, PubMed:26133119, PubMed:26657688, PubMed:27342858, PubMed:27428775, PubMed:27493187, PubMed:34711951). The two outer rings are each formed by seven alpha subunits, and the two inner rings are formed by seven beta subunits (PubMed:25599644, PubMed:26133119, PubMed:26657688, PubMed:27342858, PubMed:27428775, PubMed:27493187, PubMed:34711951). The proteolytic activity is exerted by three beta-subunits PSMB5, PSMB6 and PSMB7 (PubMed:25599644, PubMed:26133119, PubMed:26657688, PubMed:27342858, PubMed:27428775, PubMed:27493187, PubMed:34711951). Interacts with AURKB (PubMed:14674694). Interacts with CDKN1A (PubMed:11350925). Interacts with MDM2 and RB1 (PubMed:16337594). Interacts with the C-terminus of TBXA2R isoform 2 (PubMed:17499743). Interacts with DNAJB2 (PubMed:15936278).</text>
</comment>
<comment type="subunit">
    <text evidence="7">(Microbial infection) Interacts with HIV-1 Tat protein.</text>
</comment>
<comment type="subunit">
    <text evidence="15">(Microbial infection) Interacts with hepatitis C virus (HCV) F protein.</text>
</comment>
<comment type="subunit">
    <text evidence="10">(Microbial infection) Interacts with Epstein-Barr virus EBNA3 proteins.</text>
</comment>
<comment type="interaction">
    <interactant intactId="EBI-348380">
        <id>P25788</id>
    </interactant>
    <interactant intactId="EBI-721179">
        <id>P27449</id>
        <label>ATP6V0C</label>
    </interactant>
    <organismsDiffer>false</organismsDiffer>
    <experiments>3</experiments>
</comment>
<comment type="interaction">
    <interactant intactId="EBI-348380">
        <id>P25788</id>
    </interactant>
    <interactant intactId="EBI-8648738">
        <id>Q8WVV5</id>
        <label>BTN2A2</label>
    </interactant>
    <organismsDiffer>false</organismsDiffer>
    <experiments>3</experiments>
</comment>
<comment type="interaction">
    <interactant intactId="EBI-348380">
        <id>P25788</id>
    </interactant>
    <interactant intactId="EBI-10191951">
        <id>O95561</id>
        <label>C1orf105</label>
    </interactant>
    <organismsDiffer>false</organismsDiffer>
    <experiments>3</experiments>
</comment>
<comment type="interaction">
    <interactant intactId="EBI-348380">
        <id>P25788</id>
    </interactant>
    <interactant intactId="EBI-752053">
        <id>Q96CW7</id>
        <label>C4orf42</label>
    </interactant>
    <organismsDiffer>false</organismsDiffer>
    <experiments>3</experiments>
</comment>
<comment type="interaction">
    <interactant intactId="EBI-348380">
        <id>P25788</id>
    </interactant>
    <interactant intactId="EBI-7783254">
        <id>Q9NRJ3</id>
        <label>CCL28</label>
    </interactant>
    <organismsDiffer>false</organismsDiffer>
    <experiments>3</experiments>
</comment>
<comment type="interaction">
    <interactant intactId="EBI-348380">
        <id>P25788</id>
    </interactant>
    <interactant intactId="EBI-9844372">
        <id>Q9BUF7</id>
        <label>CRB3</label>
    </interactant>
    <organismsDiffer>false</organismsDiffer>
    <experiments>3</experiments>
</comment>
<comment type="interaction">
    <interactant intactId="EBI-348380">
        <id>P25788</id>
    </interactant>
    <interactant intactId="EBI-8832659">
        <id>P09228</id>
        <label>CST2</label>
    </interactant>
    <organismsDiffer>false</organismsDiffer>
    <experiments>3</experiments>
</comment>
<comment type="interaction">
    <interactant intactId="EBI-348380">
        <id>P25788</id>
    </interactant>
    <interactant intactId="EBI-2807872">
        <id>Q7Z3D6</id>
        <label>DGLUCY</label>
    </interactant>
    <organismsDiffer>false</organismsDiffer>
    <experiments>3</experiments>
</comment>
<comment type="interaction">
    <interactant intactId="EBI-348380">
        <id>P25788</id>
    </interactant>
    <interactant intactId="EBI-930865">
        <id>Q14565</id>
        <label>DMC1</label>
    </interactant>
    <organismsDiffer>false</organismsDiffer>
    <experiments>7</experiments>
</comment>
<comment type="interaction">
    <interactant intactId="EBI-348380">
        <id>P25788</id>
    </interactant>
    <interactant intactId="EBI-9679045">
        <id>Q9NQL9</id>
        <label>DMRT3</label>
    </interactant>
    <organismsDiffer>false</organismsDiffer>
    <experiments>3</experiments>
</comment>
<comment type="interaction">
    <interactant intactId="EBI-348380">
        <id>P25788</id>
    </interactant>
    <interactant intactId="EBI-10264767">
        <id>Q8N0U1</id>
        <label>FAM171A2</label>
    </interactant>
    <organismsDiffer>false</organismsDiffer>
    <experiments>3</experiments>
</comment>
<comment type="interaction">
    <interactant intactId="EBI-348380">
        <id>P25788</id>
    </interactant>
    <interactant intactId="EBI-10291578">
        <id>Q96MZ4</id>
        <label>FAM218A</label>
    </interactant>
    <organismsDiffer>false</organismsDiffer>
    <experiments>3</experiments>
</comment>
<comment type="interaction">
    <interactant intactId="EBI-348380">
        <id>P25788</id>
    </interactant>
    <interactant intactId="EBI-1384254">
        <id>Q86UY5</id>
        <label>FAM83A</label>
    </interactant>
    <organismsDiffer>false</organismsDiffer>
    <experiments>3</experiments>
</comment>
<comment type="interaction">
    <interactant intactId="EBI-348380">
        <id>P25788</id>
    </interactant>
    <interactant intactId="EBI-744419">
        <id>Q96D16</id>
        <label>FBXL18</label>
    </interactant>
    <organismsDiffer>false</organismsDiffer>
    <experiments>3</experiments>
</comment>
<comment type="interaction">
    <interactant intactId="EBI-348380">
        <id>P25788</id>
    </interactant>
    <interactant intactId="EBI-1161222">
        <id>Q9Y3I1</id>
        <label>FBXO7</label>
    </interactant>
    <organismsDiffer>false</organismsDiffer>
    <experiments>6</experiments>
</comment>
<comment type="interaction">
    <interactant intactId="EBI-348380">
        <id>P25788</id>
    </interactant>
    <interactant intactId="EBI-2806671">
        <id>P23769</id>
        <label>GATA2</label>
    </interactant>
    <organismsDiffer>false</organismsDiffer>
    <experiments>4</experiments>
</comment>
<comment type="interaction">
    <interactant intactId="EBI-348380">
        <id>P25788</id>
    </interactant>
    <interactant intactId="EBI-6664760">
        <id>P23771</id>
        <label>GATA3</label>
    </interactant>
    <organismsDiffer>false</organismsDiffer>
    <experiments>3</experiments>
</comment>
<comment type="interaction">
    <interactant intactId="EBI-348380">
        <id>P25788</id>
    </interactant>
    <interactant intactId="EBI-739467">
        <id>Q9H8Y8</id>
        <label>GORASP2</label>
    </interactant>
    <organismsDiffer>false</organismsDiffer>
    <experiments>3</experiments>
</comment>
<comment type="interaction">
    <interactant intactId="EBI-348380">
        <id>P25788</id>
    </interactant>
    <interactant intactId="EBI-10267476">
        <id>Q8N779</id>
        <label>hCG_1998195</label>
    </interactant>
    <organismsDiffer>false</organismsDiffer>
    <experiments>3</experiments>
</comment>
<comment type="interaction">
    <interactant intactId="EBI-348380">
        <id>P25788</id>
    </interactant>
    <interactant intactId="EBI-3893098">
        <id>Q6IPM2</id>
        <label>IQCE</label>
    </interactant>
    <organismsDiffer>false</organismsDiffer>
    <experiments>4</experiments>
</comment>
<comment type="interaction">
    <interactant intactId="EBI-348380">
        <id>P25788</id>
    </interactant>
    <interactant intactId="EBI-10254473">
        <id>Q6UWL6</id>
        <label>KIRREL2</label>
    </interactant>
    <organismsDiffer>false</organismsDiffer>
    <experiments>3</experiments>
</comment>
<comment type="interaction">
    <interactant intactId="EBI-348380">
        <id>P25788</id>
    </interactant>
    <interactant intactId="EBI-10267656">
        <id>Q8N7Y1</id>
        <label>KIRREL3-AS3</label>
    </interactant>
    <organismsDiffer>false</organismsDiffer>
    <experiments>3</experiments>
</comment>
<comment type="interaction">
    <interactant intactId="EBI-348380">
        <id>P25788</id>
    </interactant>
    <interactant intactId="EBI-1048945">
        <id>Q3LI72</id>
        <label>KRTAP19-5</label>
    </interactant>
    <organismsDiffer>false</organismsDiffer>
    <experiments>3</experiments>
</comment>
<comment type="interaction">
    <interactant intactId="EBI-348380">
        <id>P25788</id>
    </interactant>
    <interactant intactId="EBI-3957672">
        <id>Q6PEX3</id>
        <label>KRTAP26-1</label>
    </interactant>
    <organismsDiffer>false</organismsDiffer>
    <experiments>3</experiments>
</comment>
<comment type="interaction">
    <interactant intactId="EBI-348380">
        <id>P25788</id>
    </interactant>
    <interactant intactId="EBI-10261141">
        <id>Q8IUC2</id>
        <label>KRTAP8-1</label>
    </interactant>
    <organismsDiffer>false</organismsDiffer>
    <experiments>3</experiments>
</comment>
<comment type="interaction">
    <interactant intactId="EBI-348380">
        <id>P25788</id>
    </interactant>
    <interactant intactId="EBI-742828">
        <id>Q14847</id>
        <label>LASP1</label>
    </interactant>
    <organismsDiffer>false</organismsDiffer>
    <experiments>3</experiments>
</comment>
<comment type="interaction">
    <interactant intactId="EBI-348380">
        <id>P25788</id>
    </interactant>
    <interactant intactId="EBI-1052895">
        <id>O95202</id>
        <label>LETM1</label>
    </interactant>
    <organismsDiffer>false</organismsDiffer>
    <experiments>3</experiments>
</comment>
<comment type="interaction">
    <interactant intactId="EBI-348380">
        <id>P25788</id>
    </interactant>
    <interactant intactId="EBI-10173129">
        <id>Q8NAJ2</id>
        <label>LINC02913</label>
    </interactant>
    <organismsDiffer>false</organismsDiffer>
    <experiments>3</experiments>
</comment>
<comment type="interaction">
    <interactant intactId="EBI-348380">
        <id>P25788</id>
    </interactant>
    <interactant intactId="EBI-389668">
        <id>Q00987</id>
        <label>MDM2</label>
    </interactant>
    <organismsDiffer>false</organismsDiffer>
    <experiments>2</experiments>
</comment>
<comment type="interaction">
    <interactant intactId="EBI-348380">
        <id>P25788</id>
    </interactant>
    <interactant intactId="EBI-1050253">
        <id>Q96PC5</id>
        <label>MIA2</label>
    </interactant>
    <organismsDiffer>false</organismsDiffer>
    <experiments>3</experiments>
</comment>
<comment type="interaction">
    <interactant intactId="EBI-348380">
        <id>P25788</id>
    </interactant>
    <interactant intactId="EBI-10307610">
        <id>Q9H6H2</id>
        <label>MUM1</label>
    </interactant>
    <organismsDiffer>false</organismsDiffer>
    <experiments>3</experiments>
</comment>
<comment type="interaction">
    <interactant intactId="EBI-348380">
        <id>P25788</id>
    </interactant>
    <interactant intactId="EBI-10210114">
        <id>P48146</id>
        <label>NPBWR2</label>
    </interactant>
    <organismsDiffer>false</organismsDiffer>
    <experiments>3</experiments>
</comment>
<comment type="interaction">
    <interactant intactId="EBI-348380">
        <id>P25788</id>
    </interactant>
    <interactant intactId="EBI-747044">
        <id>P16860</id>
        <label>NPPB</label>
    </interactant>
    <organismsDiffer>false</organismsDiffer>
    <experiments>3</experiments>
</comment>
<comment type="interaction">
    <interactant intactId="EBI-348380">
        <id>P25788</id>
    </interactant>
    <interactant intactId="EBI-5660512">
        <id>Q8N2R0</id>
        <label>OSR2</label>
    </interactant>
    <organismsDiffer>false</organismsDiffer>
    <experiments>3</experiments>
</comment>
<comment type="interaction">
    <interactant intactId="EBI-348380">
        <id>P25788</id>
    </interactant>
    <interactant intactId="EBI-2562092">
        <id>Q86TB9</id>
        <label>PATL1</label>
    </interactant>
    <organismsDiffer>false</organismsDiffer>
    <experiments>3</experiments>
</comment>
<comment type="interaction">
    <interactant intactId="EBI-348380">
        <id>P25788</id>
    </interactant>
    <interactant intactId="EBI-10243387">
        <id>Q58A44</id>
        <label>PCOTH</label>
    </interactant>
    <organismsDiffer>false</organismsDiffer>
    <experiments>3</experiments>
</comment>
<comment type="interaction">
    <interactant intactId="EBI-348380">
        <id>P25788</id>
    </interactant>
    <interactant intactId="EBI-295890">
        <id>P29590</id>
        <label>PML</label>
    </interactant>
    <organismsDiffer>false</organismsDiffer>
    <experiments>2</experiments>
</comment>
<comment type="interaction">
    <interactant intactId="EBI-348380">
        <id>P25788</id>
    </interactant>
    <interactant intactId="EBI-10234793">
        <id>Q14CW7</id>
        <label>PRR10</label>
    </interactant>
    <organismsDiffer>false</organismsDiffer>
    <experiments>3</experiments>
</comment>
<comment type="interaction">
    <interactant intactId="EBI-348380">
        <id>P25788</id>
    </interactant>
    <interactant intactId="EBI-740924">
        <id>Q9NZ81</id>
        <label>PRR13</label>
    </interactant>
    <organismsDiffer>false</organismsDiffer>
    <experiments>3</experiments>
</comment>
<comment type="interaction">
    <interactant intactId="EBI-348380">
        <id>P25788</id>
    </interactant>
    <interactant intactId="EBI-2803328">
        <id>P79522</id>
        <label>PRR3</label>
    </interactant>
    <organismsDiffer>false</organismsDiffer>
    <experiments>3</experiments>
</comment>
<comment type="interaction">
    <interactant intactId="EBI-348380">
        <id>P25788</id>
    </interactant>
    <interactant intactId="EBI-359352">
        <id>P25786</id>
        <label>PSMA1</label>
    </interactant>
    <organismsDiffer>false</organismsDiffer>
    <experiments>21</experiments>
</comment>
<comment type="interaction">
    <interactant intactId="EBI-348380">
        <id>P25788</id>
    </interactant>
    <interactant intactId="EBI-603262">
        <id>P25787</id>
        <label>PSMA2</label>
    </interactant>
    <organismsDiffer>false</organismsDiffer>
    <experiments>6</experiments>
</comment>
<comment type="interaction">
    <interactant intactId="EBI-348380">
        <id>P25788</id>
    </interactant>
    <interactant intactId="EBI-359310">
        <id>P25789</id>
        <label>PSMA4</label>
    </interactant>
    <organismsDiffer>false</organismsDiffer>
    <experiments>4</experiments>
</comment>
<comment type="interaction">
    <interactant intactId="EBI-348380">
        <id>P25788</id>
    </interactant>
    <interactant intactId="EBI-357793">
        <id>P60900</id>
        <label>PSMA6</label>
    </interactant>
    <organismsDiffer>false</organismsDiffer>
    <experiments>10</experiments>
</comment>
<comment type="interaction">
    <interactant intactId="EBI-348380">
        <id>P25788</id>
    </interactant>
    <interactant intactId="EBI-603272">
        <id>O14818</id>
        <label>PSMA7</label>
    </interactant>
    <organismsDiffer>false</organismsDiffer>
    <experiments>7</experiments>
</comment>
<comment type="interaction">
    <interactant intactId="EBI-348380">
        <id>P25788</id>
    </interactant>
    <interactant intactId="EBI-603350">
        <id>P28070</id>
        <label>PSMB4</label>
    </interactant>
    <organismsDiffer>false</organismsDiffer>
    <experiments>5</experiments>
</comment>
<comment type="interaction">
    <interactant intactId="EBI-348380">
        <id>P25788</id>
    </interactant>
    <interactant intactId="EBI-724478">
        <id>Q9H3S7</id>
        <label>PTPN23</label>
    </interactant>
    <organismsDiffer>false</organismsDiffer>
    <experiments>3</experiments>
</comment>
<comment type="interaction">
    <interactant intactId="EBI-348380">
        <id>P25788</id>
    </interactant>
    <interactant intactId="EBI-10251192">
        <id>Q6NUJ5</id>
        <label>PWWP2B</label>
    </interactant>
    <organismsDiffer>false</organismsDiffer>
    <experiments>3</experiments>
</comment>
<comment type="interaction">
    <interactant intactId="EBI-348380">
        <id>P25788</id>
    </interactant>
    <interactant intactId="EBI-743796">
        <id>Q8TBN0</id>
        <label>RAB3IL1</label>
    </interactant>
    <organismsDiffer>false</organismsDiffer>
    <experiments>3</experiments>
</comment>
<comment type="interaction">
    <interactant intactId="EBI-348380">
        <id>P25788</id>
    </interactant>
    <interactant intactId="EBI-948156">
        <id>Q9Y4B4</id>
        <label>RAD54L2</label>
    </interactant>
    <organismsDiffer>false</organismsDiffer>
    <experiments>3</experiments>
</comment>
<comment type="interaction">
    <interactant intactId="EBI-348380">
        <id>P25788</id>
    </interactant>
    <interactant intactId="EBI-744023">
        <id>Q9BTL3</id>
        <label>RAMAC</label>
    </interactant>
    <organismsDiffer>false</organismsDiffer>
    <experiments>3</experiments>
</comment>
<comment type="interaction">
    <interactant intactId="EBI-348380">
        <id>P25788</id>
    </interactant>
    <interactant intactId="EBI-746056">
        <id>O43251</id>
        <label>RBFOX2</label>
    </interactant>
    <organismsDiffer>false</organismsDiffer>
    <experiments>3</experiments>
</comment>
<comment type="interaction">
    <interactant intactId="EBI-348380">
        <id>P25788</id>
    </interactant>
    <interactant intactId="EBI-746862">
        <id>Q9BTD8</id>
        <label>RBM42</label>
    </interactant>
    <organismsDiffer>false</organismsDiffer>
    <experiments>4</experiments>
</comment>
<comment type="interaction">
    <interactant intactId="EBI-348380">
        <id>P25788</id>
    </interactant>
    <interactant intactId="EBI-10217913">
        <id>Q14D33</id>
        <label>RTP5</label>
    </interactant>
    <organismsDiffer>false</organismsDiffer>
    <experiments>3</experiments>
</comment>
<comment type="interaction">
    <interactant intactId="EBI-348380">
        <id>P25788</id>
    </interactant>
    <interactant intactId="EBI-10248967">
        <id>Q66K80</id>
        <label>RUSC1-AS1</label>
    </interactant>
    <organismsDiffer>false</organismsDiffer>
    <experiments>3</experiments>
</comment>
<comment type="interaction">
    <interactant intactId="EBI-348380">
        <id>P25788</id>
    </interactant>
    <interactant intactId="EBI-744603">
        <id>Q15637</id>
        <label>SF1</label>
    </interactant>
    <organismsDiffer>false</organismsDiffer>
    <experiments>3</experiments>
</comment>
<comment type="interaction">
    <interactant intactId="EBI-348380">
        <id>P25788</id>
    </interactant>
    <interactant intactId="EBI-10269374">
        <id>Q8ND83</id>
        <label>SLAIN1</label>
    </interactant>
    <organismsDiffer>false</organismsDiffer>
    <experiments>3</experiments>
</comment>
<comment type="interaction">
    <interactant intactId="EBI-348380">
        <id>P25788</id>
    </interactant>
    <interactant intactId="EBI-10256583">
        <id>Q7L9D0</id>
        <label>SLC22A23</label>
    </interactant>
    <organismsDiffer>false</organismsDiffer>
    <experiments>3</experiments>
</comment>
<comment type="interaction">
    <interactant intactId="EBI-348380">
        <id>P25788</id>
    </interactant>
    <interactant intactId="EBI-372475">
        <id>P14678-2</id>
        <label>SNRPB</label>
    </interactant>
    <organismsDiffer>false</organismsDiffer>
    <experiments>3</experiments>
</comment>
<comment type="interaction">
    <interactant intactId="EBI-348380">
        <id>P25788</id>
    </interactant>
    <interactant intactId="EBI-10246938">
        <id>Q5TAL4</id>
        <label>SNRPC</label>
    </interactant>
    <organismsDiffer>false</organismsDiffer>
    <experiments>3</experiments>
</comment>
<comment type="interaction">
    <interactant intactId="EBI-348380">
        <id>P25788</id>
    </interactant>
    <interactant intactId="EBI-8635958">
        <id>Q6RVD6</id>
        <label>SPATA8</label>
    </interactant>
    <organismsDiffer>false</organismsDiffer>
    <experiments>3</experiments>
</comment>
<comment type="interaction">
    <interactant intactId="EBI-348380">
        <id>P25788</id>
    </interactant>
    <interactant intactId="EBI-744942">
        <id>Q12846</id>
        <label>STX4</label>
    </interactant>
    <organismsDiffer>false</organismsDiffer>
    <experiments>3</experiments>
</comment>
<comment type="interaction">
    <interactant intactId="EBI-348380">
        <id>P25788</id>
    </interactant>
    <interactant intactId="EBI-2695795">
        <id>O43752</id>
        <label>STX6</label>
    </interactant>
    <organismsDiffer>false</organismsDiffer>
    <experiments>3</experiments>
</comment>
<comment type="interaction">
    <interactant intactId="EBI-348380">
        <id>P25788</id>
    </interactant>
    <interactant intactId="EBI-10288943">
        <id>Q96HZ7</id>
        <label>URB1-AS1</label>
    </interactant>
    <organismsDiffer>false</organismsDiffer>
    <experiments>3</experiments>
</comment>
<comment type="interaction">
    <interactant intactId="EBI-348380">
        <id>P25788</id>
    </interactant>
    <interactant intactId="EBI-2559305">
        <id>A5D8V6</id>
        <label>VPS37C</label>
    </interactant>
    <organismsDiffer>false</organismsDiffer>
    <experiments>3</experiments>
</comment>
<comment type="interaction">
    <interactant intactId="EBI-348380">
        <id>P25788</id>
    </interactant>
    <interactant intactId="EBI-2813661">
        <id>Q8N895</id>
        <label>ZNF366</label>
    </interactant>
    <organismsDiffer>false</organismsDiffer>
    <experiments>5</experiments>
</comment>
<comment type="interaction">
    <interactant intactId="EBI-348380">
        <id>P25788</id>
    </interactant>
    <interactant intactId="EBI-8651919">
        <id>Q66K41</id>
        <label>ZNF385C</label>
    </interactant>
    <organismsDiffer>false</organismsDiffer>
    <experiments>4</experiments>
</comment>
<comment type="interaction">
    <interactant intactId="EBI-348380">
        <id>P25788</id>
    </interactant>
    <interactant intactId="EBI-16429014">
        <id>A0A0S2Z5X4</id>
        <label>ZNF688</label>
    </interactant>
    <organismsDiffer>false</organismsDiffer>
    <experiments>3</experiments>
</comment>
<comment type="interaction">
    <interactant intactId="EBI-348380">
        <id>P25788</id>
    </interactant>
    <interactant intactId="EBI-10175488">
        <id>B2R550</id>
    </interactant>
    <organismsDiffer>false</organismsDiffer>
    <experiments>3</experiments>
</comment>
<comment type="interaction">
    <interactant intactId="EBI-348380">
        <id>P25788</id>
    </interactant>
    <interactant intactId="EBI-10244213">
        <id>Q5JPT6</id>
    </interactant>
    <organismsDiffer>false</organismsDiffer>
    <experiments>3</experiments>
</comment>
<comment type="interaction">
    <interactant intactId="EBI-348380">
        <id>P25788</id>
    </interactant>
    <interactant intactId="EBI-10248148">
        <id>Q5W150</id>
    </interactant>
    <organismsDiffer>false</organismsDiffer>
    <experiments>3</experiments>
</comment>
<comment type="interaction">
    <interactant intactId="EBI-348380">
        <id>P25788</id>
    </interactant>
    <interactant intactId="EBI-10255941">
        <id>Q7KZQ1</id>
    </interactant>
    <organismsDiffer>false</organismsDiffer>
    <experiments>3</experiments>
</comment>
<comment type="interaction">
    <interactant intactId="EBI-348380">
        <id>P25788</id>
    </interactant>
    <interactant intactId="EBI-10309031">
        <id>Q9H8E5</id>
    </interactant>
    <organismsDiffer>false</organismsDiffer>
    <experiments>3</experiments>
</comment>
<comment type="interaction">
    <interactant intactId="EBI-348380">
        <id>P25788</id>
    </interactant>
    <interactant intactId="EBI-10309885">
        <id>Q9HAA0</id>
    </interactant>
    <organismsDiffer>false</organismsDiffer>
    <experiments>3</experiments>
</comment>
<comment type="interaction">
    <interactant intactId="EBI-348380">
        <id>P25788</id>
    </interactant>
    <interactant intactId="EBI-10315054">
        <id>Q9NWL9</id>
    </interactant>
    <organismsDiffer>false</organismsDiffer>
    <experiments>3</experiments>
</comment>
<comment type="interaction">
    <interactant intactId="EBI-348394">
        <id>P25788-2</id>
    </interactant>
    <interactant intactId="EBI-748312">
        <id>P49821</id>
        <label>NDUFV1</label>
    </interactant>
    <organismsDiffer>false</organismsDiffer>
    <experiments>3</experiments>
</comment>
<comment type="interaction">
    <interactant intactId="EBI-348394">
        <id>P25788-2</id>
    </interactant>
    <interactant intactId="EBI-720609">
        <id>O76024</id>
        <label>WFS1</label>
    </interactant>
    <organismsDiffer>false</organismsDiffer>
    <experiments>3</experiments>
</comment>
<comment type="subcellular location">
    <subcellularLocation>
        <location evidence="4 24">Cytoplasm</location>
    </subcellularLocation>
    <subcellularLocation>
        <location evidence="4 24">Nucleus</location>
    </subcellularLocation>
    <text evidence="24">Translocated from the cytoplasm into the nucleus following interaction with AKIRIN2, which bridges the proteasome with the nuclear import receptor IPO9.</text>
</comment>
<comment type="alternative products">
    <event type="alternative splicing"/>
    <isoform>
        <id>P25788-1</id>
        <name>1</name>
        <sequence type="displayed"/>
    </isoform>
    <isoform>
        <id>P25788-2</id>
        <name>2</name>
        <sequence type="described" ref="VSP_005280"/>
    </isoform>
</comment>
<comment type="induction">
    <text evidence="3 6 12">Down-regulated by antioxidants BO-653 and probucol. Up-regulated by bacterial lipopolysaccharides (LPS) and TNF.</text>
</comment>
<comment type="similarity">
    <text evidence="1">Belongs to the peptidase T1A family.</text>
</comment>
<evidence type="ECO:0000255" key="1">
    <source>
        <dbReference type="PROSITE-ProRule" id="PRU00808"/>
    </source>
</evidence>
<evidence type="ECO:0000269" key="2">
    <source>
    </source>
</evidence>
<evidence type="ECO:0000269" key="3">
    <source>
    </source>
</evidence>
<evidence type="ECO:0000269" key="4">
    <source>
    </source>
</evidence>
<evidence type="ECO:0000269" key="5">
    <source>
    </source>
</evidence>
<evidence type="ECO:0000269" key="6">
    <source>
    </source>
</evidence>
<evidence type="ECO:0000269" key="7">
    <source>
    </source>
</evidence>
<evidence type="ECO:0000269" key="8">
    <source>
    </source>
</evidence>
<evidence type="ECO:0000269" key="9">
    <source>
    </source>
</evidence>
<evidence type="ECO:0000269" key="10">
    <source>
    </source>
</evidence>
<evidence type="ECO:0000269" key="11">
    <source>
    </source>
</evidence>
<evidence type="ECO:0000269" key="12">
    <source>
    </source>
</evidence>
<evidence type="ECO:0000269" key="13">
    <source>
    </source>
</evidence>
<evidence type="ECO:0000269" key="14">
    <source>
    </source>
</evidence>
<evidence type="ECO:0000269" key="15">
    <source>
    </source>
</evidence>
<evidence type="ECO:0000269" key="16">
    <source>
    </source>
</evidence>
<evidence type="ECO:0000269" key="17">
    <source>
    </source>
</evidence>
<evidence type="ECO:0000269" key="18">
    <source>
    </source>
</evidence>
<evidence type="ECO:0000269" key="19">
    <source>
    </source>
</evidence>
<evidence type="ECO:0000269" key="20">
    <source>
    </source>
</evidence>
<evidence type="ECO:0000269" key="21">
    <source>
    </source>
</evidence>
<evidence type="ECO:0000269" key="22">
    <source>
    </source>
</evidence>
<evidence type="ECO:0000269" key="23">
    <source>
    </source>
</evidence>
<evidence type="ECO:0000269" key="24">
    <source>
    </source>
</evidence>
<evidence type="ECO:0000303" key="25">
    <source>
    </source>
</evidence>
<evidence type="ECO:0000303" key="26">
    <source>
    </source>
</evidence>
<evidence type="ECO:0000303" key="27">
    <source ref="2"/>
</evidence>
<evidence type="ECO:0000305" key="28"/>
<evidence type="ECO:0000312" key="29">
    <source>
        <dbReference type="HGNC" id="HGNC:9532"/>
    </source>
</evidence>
<evidence type="ECO:0007744" key="30">
    <source>
    </source>
</evidence>
<evidence type="ECO:0007744" key="31">
    <source>
    </source>
</evidence>
<evidence type="ECO:0007744" key="32">
    <source>
    </source>
</evidence>
<evidence type="ECO:0007744" key="33">
    <source>
    </source>
</evidence>
<evidence type="ECO:0007744" key="34">
    <source>
    </source>
</evidence>
<evidence type="ECO:0007744" key="35">
    <source>
    </source>
</evidence>
<evidence type="ECO:0007744" key="36">
    <source>
    </source>
</evidence>
<evidence type="ECO:0007744" key="37">
    <source>
    </source>
</evidence>
<evidence type="ECO:0007744" key="38">
    <source>
    </source>
</evidence>
<evidence type="ECO:0007744" key="39">
    <source>
    </source>
</evidence>
<evidence type="ECO:0007744" key="40">
    <source>
    </source>
</evidence>
<evidence type="ECO:0007744" key="41">
    <source>
    </source>
</evidence>
<evidence type="ECO:0007744" key="42">
    <source>
    </source>
</evidence>
<evidence type="ECO:0007744" key="43">
    <source>
    </source>
</evidence>
<evidence type="ECO:0007744" key="44">
    <source>
    </source>
</evidence>
<evidence type="ECO:0007744" key="45">
    <source>
    </source>
</evidence>
<evidence type="ECO:0007829" key="46">
    <source>
        <dbReference type="PDB" id="5A0Q"/>
    </source>
</evidence>
<evidence type="ECO:0007829" key="47">
    <source>
        <dbReference type="PDB" id="5LE5"/>
    </source>
</evidence>
<evidence type="ECO:0007829" key="48">
    <source>
        <dbReference type="PDB" id="6KWY"/>
    </source>
</evidence>
<evidence type="ECO:0007829" key="49">
    <source>
        <dbReference type="PDB" id="6RGQ"/>
    </source>
</evidence>
<evidence type="ECO:0007829" key="50">
    <source>
        <dbReference type="PDB" id="8QYO"/>
    </source>
</evidence>
<evidence type="ECO:0007829" key="51">
    <source>
        <dbReference type="PDB" id="8QZ9"/>
    </source>
</evidence>
<evidence type="ECO:0007829" key="52">
    <source>
        <dbReference type="PDB" id="8TM3"/>
    </source>
</evidence>
<evidence type="ECO:0007829" key="53">
    <source>
        <dbReference type="PDB" id="8UD9"/>
    </source>
</evidence>
<feature type="initiator methionine" description="Removed" evidence="5 37 42 43">
    <location>
        <position position="1"/>
    </location>
</feature>
<feature type="chain" id="PRO_0000124091" description="Proteasome subunit alpha type-3">
    <location>
        <begin position="2"/>
        <end position="255"/>
    </location>
</feature>
<feature type="modified residue" description="N-acetylserine" evidence="5 37 42 43">
    <location>
        <position position="2"/>
    </location>
</feature>
<feature type="modified residue" description="N6-acetyllysine" evidence="38">
    <location>
        <position position="57"/>
    </location>
</feature>
<feature type="modified residue" description="N6-acetyllysine" evidence="38">
    <location>
        <position position="206"/>
    </location>
</feature>
<feature type="modified residue" description="N6-acetyllysine" evidence="38">
    <location>
        <position position="230"/>
    </location>
</feature>
<feature type="modified residue" description="Phosphoserine" evidence="32 44">
    <location>
        <position position="243"/>
    </location>
</feature>
<feature type="modified residue" description="Phosphoserine" evidence="5 30 31 32 33 34 35 36 39 40 41 44 45">
    <location>
        <position position="250"/>
    </location>
</feature>
<feature type="splice variant" id="VSP_005280" description="In isoform 2." evidence="25 27">
    <location>
        <begin position="136"/>
        <end position="142"/>
    </location>
</feature>
<feature type="sequence variant" id="VAR_075259" description="Found in a patient with Nakajo syndrome who also carries a mutation in PSMB8; uncertain significance; patients' cells show reduction of proteasome content and endopeptidase activity of the proteasome; dbSNP:rs1555353410." evidence="18">
    <location>
        <position position="233"/>
    </location>
</feature>
<feature type="sequence conflict" description="In Ref. 5; AAH29402." evidence="28" ref="5">
    <original>I</original>
    <variation>M</variation>
    <location>
        <position position="91"/>
    </location>
</feature>
<feature type="strand" evidence="48">
    <location>
        <begin position="6"/>
        <end position="10"/>
    </location>
</feature>
<feature type="strand" evidence="46">
    <location>
        <begin position="11"/>
        <end position="14"/>
    </location>
</feature>
<feature type="strand" evidence="52">
    <location>
        <begin position="17"/>
        <end position="19"/>
    </location>
</feature>
<feature type="helix" evidence="47">
    <location>
        <begin position="22"/>
        <end position="32"/>
    </location>
</feature>
<feature type="strand" evidence="47">
    <location>
        <begin position="37"/>
        <end position="42"/>
    </location>
</feature>
<feature type="strand" evidence="47">
    <location>
        <begin position="45"/>
        <end position="53"/>
    </location>
</feature>
<feature type="strand" evidence="50">
    <location>
        <begin position="57"/>
        <end position="59"/>
    </location>
</feature>
<feature type="turn" evidence="47">
    <location>
        <begin position="61"/>
        <end position="64"/>
    </location>
</feature>
<feature type="strand" evidence="47">
    <location>
        <begin position="67"/>
        <end position="71"/>
    </location>
</feature>
<feature type="strand" evidence="47">
    <location>
        <begin position="74"/>
        <end position="80"/>
    </location>
</feature>
<feature type="helix" evidence="47">
    <location>
        <begin position="82"/>
        <end position="103"/>
    </location>
</feature>
<feature type="helix" evidence="47">
    <location>
        <begin position="109"/>
        <end position="122"/>
    </location>
</feature>
<feature type="strand" evidence="53">
    <location>
        <begin position="125"/>
        <end position="129"/>
    </location>
</feature>
<feature type="strand" evidence="47">
    <location>
        <begin position="133"/>
        <end position="142"/>
    </location>
</feature>
<feature type="turn" evidence="47">
    <location>
        <begin position="143"/>
        <end position="145"/>
    </location>
</feature>
<feature type="strand" evidence="47">
    <location>
        <begin position="146"/>
        <end position="152"/>
    </location>
</feature>
<feature type="turn" evidence="52">
    <location>
        <begin position="154"/>
        <end position="156"/>
    </location>
</feature>
<feature type="strand" evidence="47">
    <location>
        <begin position="158"/>
        <end position="167"/>
    </location>
</feature>
<feature type="helix" evidence="47">
    <location>
        <begin position="170"/>
        <end position="177"/>
    </location>
</feature>
<feature type="strand" evidence="51">
    <location>
        <begin position="178"/>
        <end position="180"/>
    </location>
</feature>
<feature type="helix" evidence="47">
    <location>
        <begin position="182"/>
        <end position="184"/>
    </location>
</feature>
<feature type="helix" evidence="47">
    <location>
        <begin position="187"/>
        <end position="201"/>
    </location>
</feature>
<feature type="turn" evidence="47">
    <location>
        <begin position="204"/>
        <end position="206"/>
    </location>
</feature>
<feature type="strand" evidence="47">
    <location>
        <begin position="210"/>
        <end position="218"/>
    </location>
</feature>
<feature type="helix" evidence="47">
    <location>
        <begin position="219"/>
        <end position="221"/>
    </location>
</feature>
<feature type="strand" evidence="49">
    <location>
        <begin position="225"/>
        <end position="227"/>
    </location>
</feature>
<feature type="helix" evidence="47">
    <location>
        <begin position="230"/>
        <end position="244"/>
    </location>
</feature>
<gene>
    <name evidence="29" type="primary">PSMA3</name>
    <name type="synonym">HC8</name>
    <name type="synonym">PSC8</name>
</gene>
<sequence>MSSIGTGYDLSASTFSPDGRVFQVEYAMKAVENSSTAIGIRCKDGVVFGVEKLVLSKLYEEGSNKRLFNVDRHVGMAVAGLLADARSLADIAREEASNFRSNFGYNIPLKHLADRVAMYVHAYTLYSAVRPFGCSFMLGSYSVNDGAQLYMIDPSGVSYGYWGCAIGKARQAAKTEIEKLQMKEMTCRDIVKEVAKIIYIVHDEVKDKAFELELSWVGELTNGRHEIVPKDIREEAEKYAKESLKEEDESDDDNM</sequence>
<reference key="1">
    <citation type="journal article" date="1991" name="Biochim. Biophys. Acta">
        <title>Molecular cloning and sequence analysis of cDNAs for five major subunits of human proteasomes (multi-catalytic proteinase complexes).</title>
        <authorList>
            <person name="Tamura T."/>
            <person name="Lee D.H."/>
            <person name="Osaka F."/>
            <person name="Fujiwara T."/>
            <person name="Shin S."/>
            <person name="Chung C.H."/>
            <person name="Tanaka K."/>
            <person name="Ichihara A."/>
        </authorList>
    </citation>
    <scope>NUCLEOTIDE SEQUENCE [MRNA] (ISOFORM 1)</scope>
</reference>
<reference key="2">
    <citation type="submission" date="2003-08" db="EMBL/GenBank/DDBJ databases">
        <title>Cloning of human full-length CDSs in BD Creator(TM) system donor vector.</title>
        <authorList>
            <person name="Kalnine N."/>
            <person name="Chen X."/>
            <person name="Rolfs A."/>
            <person name="Halleck A."/>
            <person name="Hines L."/>
            <person name="Eisenstein S."/>
            <person name="Koundinya M."/>
            <person name="Raphael J."/>
            <person name="Moreira D."/>
            <person name="Kelley T."/>
            <person name="LaBaer J."/>
            <person name="Lin Y."/>
            <person name="Phelan M."/>
            <person name="Farmer A."/>
        </authorList>
    </citation>
    <scope>NUCLEOTIDE SEQUENCE [LARGE SCALE MRNA] (ISOFORMS 1 AND 2)</scope>
</reference>
<reference key="3">
    <citation type="journal article" date="2004" name="Nat. Genet.">
        <title>Complete sequencing and characterization of 21,243 full-length human cDNAs.</title>
        <authorList>
            <person name="Ota T."/>
            <person name="Suzuki Y."/>
            <person name="Nishikawa T."/>
            <person name="Otsuki T."/>
            <person name="Sugiyama T."/>
            <person name="Irie R."/>
            <person name="Wakamatsu A."/>
            <person name="Hayashi K."/>
            <person name="Sato H."/>
            <person name="Nagai K."/>
            <person name="Kimura K."/>
            <person name="Makita H."/>
            <person name="Sekine M."/>
            <person name="Obayashi M."/>
            <person name="Nishi T."/>
            <person name="Shibahara T."/>
            <person name="Tanaka T."/>
            <person name="Ishii S."/>
            <person name="Yamamoto J."/>
            <person name="Saito K."/>
            <person name="Kawai Y."/>
            <person name="Isono Y."/>
            <person name="Nakamura Y."/>
            <person name="Nagahari K."/>
            <person name="Murakami K."/>
            <person name="Yasuda T."/>
            <person name="Iwayanagi T."/>
            <person name="Wagatsuma M."/>
            <person name="Shiratori A."/>
            <person name="Sudo H."/>
            <person name="Hosoiri T."/>
            <person name="Kaku Y."/>
            <person name="Kodaira H."/>
            <person name="Kondo H."/>
            <person name="Sugawara M."/>
            <person name="Takahashi M."/>
            <person name="Kanda K."/>
            <person name="Yokoi T."/>
            <person name="Furuya T."/>
            <person name="Kikkawa E."/>
            <person name="Omura Y."/>
            <person name="Abe K."/>
            <person name="Kamihara K."/>
            <person name="Katsuta N."/>
            <person name="Sato K."/>
            <person name="Tanikawa M."/>
            <person name="Yamazaki M."/>
            <person name="Ninomiya K."/>
            <person name="Ishibashi T."/>
            <person name="Yamashita H."/>
            <person name="Murakawa K."/>
            <person name="Fujimori K."/>
            <person name="Tanai H."/>
            <person name="Kimata M."/>
            <person name="Watanabe M."/>
            <person name="Hiraoka S."/>
            <person name="Chiba Y."/>
            <person name="Ishida S."/>
            <person name="Ono Y."/>
            <person name="Takiguchi S."/>
            <person name="Watanabe S."/>
            <person name="Yosida M."/>
            <person name="Hotuta T."/>
            <person name="Kusano J."/>
            <person name="Kanehori K."/>
            <person name="Takahashi-Fujii A."/>
            <person name="Hara H."/>
            <person name="Tanase T.-O."/>
            <person name="Nomura Y."/>
            <person name="Togiya S."/>
            <person name="Komai F."/>
            <person name="Hara R."/>
            <person name="Takeuchi K."/>
            <person name="Arita M."/>
            <person name="Imose N."/>
            <person name="Musashino K."/>
            <person name="Yuuki H."/>
            <person name="Oshima A."/>
            <person name="Sasaki N."/>
            <person name="Aotsuka S."/>
            <person name="Yoshikawa Y."/>
            <person name="Matsunawa H."/>
            <person name="Ichihara T."/>
            <person name="Shiohata N."/>
            <person name="Sano S."/>
            <person name="Moriya S."/>
            <person name="Momiyama H."/>
            <person name="Satoh N."/>
            <person name="Takami S."/>
            <person name="Terashima Y."/>
            <person name="Suzuki O."/>
            <person name="Nakagawa S."/>
            <person name="Senoh A."/>
            <person name="Mizoguchi H."/>
            <person name="Goto Y."/>
            <person name="Shimizu F."/>
            <person name="Wakebe H."/>
            <person name="Hishigaki H."/>
            <person name="Watanabe T."/>
            <person name="Sugiyama A."/>
            <person name="Takemoto M."/>
            <person name="Kawakami B."/>
            <person name="Yamazaki M."/>
            <person name="Watanabe K."/>
            <person name="Kumagai A."/>
            <person name="Itakura S."/>
            <person name="Fukuzumi Y."/>
            <person name="Fujimori Y."/>
            <person name="Komiyama M."/>
            <person name="Tashiro H."/>
            <person name="Tanigami A."/>
            <person name="Fujiwara T."/>
            <person name="Ono T."/>
            <person name="Yamada K."/>
            <person name="Fujii Y."/>
            <person name="Ozaki K."/>
            <person name="Hirao M."/>
            <person name="Ohmori Y."/>
            <person name="Kawabata A."/>
            <person name="Hikiji T."/>
            <person name="Kobatake N."/>
            <person name="Inagaki H."/>
            <person name="Ikema Y."/>
            <person name="Okamoto S."/>
            <person name="Okitani R."/>
            <person name="Kawakami T."/>
            <person name="Noguchi S."/>
            <person name="Itoh T."/>
            <person name="Shigeta K."/>
            <person name="Senba T."/>
            <person name="Matsumura K."/>
            <person name="Nakajima Y."/>
            <person name="Mizuno T."/>
            <person name="Morinaga M."/>
            <person name="Sasaki M."/>
            <person name="Togashi T."/>
            <person name="Oyama M."/>
            <person name="Hata H."/>
            <person name="Watanabe M."/>
            <person name="Komatsu T."/>
            <person name="Mizushima-Sugano J."/>
            <person name="Satoh T."/>
            <person name="Shirai Y."/>
            <person name="Takahashi Y."/>
            <person name="Nakagawa K."/>
            <person name="Okumura K."/>
            <person name="Nagase T."/>
            <person name="Nomura N."/>
            <person name="Kikuchi H."/>
            <person name="Masuho Y."/>
            <person name="Yamashita R."/>
            <person name="Nakai K."/>
            <person name="Yada T."/>
            <person name="Nakamura Y."/>
            <person name="Ohara O."/>
            <person name="Isogai T."/>
            <person name="Sugano S."/>
        </authorList>
    </citation>
    <scope>NUCLEOTIDE SEQUENCE [LARGE SCALE MRNA] (ISOFORM 1)</scope>
    <source>
        <tissue>Testis</tissue>
    </source>
</reference>
<reference key="4">
    <citation type="submission" date="2005-07" db="EMBL/GenBank/DDBJ databases">
        <authorList>
            <person name="Mural R.J."/>
            <person name="Istrail S."/>
            <person name="Sutton G.G."/>
            <person name="Florea L."/>
            <person name="Halpern A.L."/>
            <person name="Mobarry C.M."/>
            <person name="Lippert R."/>
            <person name="Walenz B."/>
            <person name="Shatkay H."/>
            <person name="Dew I."/>
            <person name="Miller J.R."/>
            <person name="Flanigan M.J."/>
            <person name="Edwards N.J."/>
            <person name="Bolanos R."/>
            <person name="Fasulo D."/>
            <person name="Halldorsson B.V."/>
            <person name="Hannenhalli S."/>
            <person name="Turner R."/>
            <person name="Yooseph S."/>
            <person name="Lu F."/>
            <person name="Nusskern D.R."/>
            <person name="Shue B.C."/>
            <person name="Zheng X.H."/>
            <person name="Zhong F."/>
            <person name="Delcher A.L."/>
            <person name="Huson D.H."/>
            <person name="Kravitz S.A."/>
            <person name="Mouchard L."/>
            <person name="Reinert K."/>
            <person name="Remington K.A."/>
            <person name="Clark A.G."/>
            <person name="Waterman M.S."/>
            <person name="Eichler E.E."/>
            <person name="Adams M.D."/>
            <person name="Hunkapiller M.W."/>
            <person name="Myers E.W."/>
            <person name="Venter J.C."/>
        </authorList>
    </citation>
    <scope>NUCLEOTIDE SEQUENCE [LARGE SCALE GENOMIC DNA]</scope>
</reference>
<reference key="5">
    <citation type="journal article" date="2004" name="Genome Res.">
        <title>The status, quality, and expansion of the NIH full-length cDNA project: the Mammalian Gene Collection (MGC).</title>
        <authorList>
            <consortium name="The MGC Project Team"/>
        </authorList>
    </citation>
    <scope>NUCLEOTIDE SEQUENCE [LARGE SCALE MRNA] (ISOFORMS 1 AND 2)</scope>
    <source>
        <tissue>Bone marrow</tissue>
        <tissue>Pancreas</tissue>
        <tissue>Urinary bladder</tissue>
    </source>
</reference>
<reference key="6">
    <citation type="journal article" date="1994" name="Biochem. Biophys. Res. Commun.">
        <title>Human proteasome subunits from 2-dimensional gels identified by partial sequencing.</title>
        <authorList>
            <person name="Kristensen P."/>
            <person name="Johnsen A.H."/>
            <person name="Uerkvitz W."/>
            <person name="Tanaka K."/>
            <person name="Hendil K.B."/>
        </authorList>
    </citation>
    <scope>PROTEIN SEQUENCE OF 116-130</scope>
</reference>
<reference key="7">
    <citation type="journal article" date="1996" name="Nature">
        <title>A role for the proteasome regulator PA28alpha in antigen presentation.</title>
        <authorList>
            <person name="Groettrup M."/>
            <person name="Soza A."/>
            <person name="Eggers M."/>
            <person name="Kuehn L."/>
            <person name="Dick T.P."/>
            <person name="Schild H."/>
            <person name="Rammensee H.G."/>
            <person name="Koszinowski U.H."/>
            <person name="Kloetzel P.M."/>
        </authorList>
    </citation>
    <scope>FUNCTION IN ANTIGEN PRESENTATION</scope>
</reference>
<reference key="8">
    <citation type="journal article" date="2000" name="J. Atheroscler. Thromb.">
        <title>Gene expression induced by BO-653, probucol and BHQ in human endothelial cells.</title>
        <authorList>
            <person name="Takabe W."/>
            <person name="Mataki C."/>
            <person name="Wada Y."/>
            <person name="Ishii M."/>
            <person name="Izumi A."/>
            <person name="Aburatani H."/>
            <person name="Hamakubo T."/>
            <person name="Niki E."/>
            <person name="Kodama T."/>
            <person name="Noguchi N."/>
        </authorList>
    </citation>
    <scope>INDUCTION BY BO-653 AND PROBUCOL</scope>
</reference>
<reference key="9">
    <citation type="journal article" date="2001" name="EMBO J.">
        <title>A degradation signal located in the C-terminus of p21WAF1/CIP1 is a binding site for the C8 alpha-subunit of the 20S proteasome.</title>
        <authorList>
            <person name="Touitou R."/>
            <person name="Richardson J."/>
            <person name="Bose S."/>
            <person name="Nakanishi M."/>
            <person name="Rivett J."/>
            <person name="Allday M.J."/>
        </authorList>
    </citation>
    <scope>FUNCTION</scope>
    <scope>INTERACTION WITH CDKN1A</scope>
</reference>
<reference key="10">
    <citation type="journal article" date="2002" name="Mol. Biol. Cell">
        <title>Clastosome: a subtype of nuclear body enriched in 19S and 20S proteasomes, ubiquitin, and protein substrates of proteasome.</title>
        <authorList>
            <person name="Lafarga M."/>
            <person name="Berciano M.T."/>
            <person name="Pena E."/>
            <person name="Mayo I."/>
            <person name="Castano J.G."/>
            <person name="Bohmann D."/>
            <person name="Rodrigues J.P."/>
            <person name="Tavanez J.P."/>
            <person name="Carmo-Fonseca M."/>
        </authorList>
    </citation>
    <scope>SUBCELLULAR LOCATION</scope>
</reference>
<reference key="11">
    <citation type="journal article" date="2002" name="Mol. Cell. Proteomics">
        <title>Mapping and structural dissection of human 20 s proteasome using proteomic approaches.</title>
        <authorList>
            <person name="Claverol S."/>
            <person name="Burlet-Schiltz O."/>
            <person name="Girbal-Neuhauser E."/>
            <person name="Gairin J.E."/>
            <person name="Monsarrat B."/>
        </authorList>
    </citation>
    <scope>ACETYLATION AT SER-2</scope>
    <scope>PHOSPHORYLATION AT SER-250</scope>
</reference>
<reference key="12">
    <citation type="journal article" date="2002" name="Scand. J. Immunol.">
        <title>Analysis of gene expression during maturation of immature dendritic cells derived from peripheral blood monocytes.</title>
        <authorList>
            <person name="Matsunaga T."/>
            <person name="Ishida T."/>
            <person name="Takekawa M."/>
            <person name="Nishimura S."/>
            <person name="Adachi M."/>
            <person name="Imai K."/>
        </authorList>
    </citation>
    <scope>INDUCTION</scope>
</reference>
<reference key="13">
    <citation type="journal article" date="2003" name="FEBS Lett.">
        <title>Human immunodeficiency virus-1 Tat protein interacts with distinct proteasomal alpha and beta subunits.</title>
        <authorList>
            <person name="Apcher G.S."/>
            <person name="Heink S."/>
            <person name="Zantopf D."/>
            <person name="Kloetzel P.-M."/>
            <person name="Schmid H.-P."/>
            <person name="Mayer R.J."/>
            <person name="Krueger E."/>
        </authorList>
    </citation>
    <scope>INTERACTION WITH HIV-1 TAT (MICROBIAL INFECTION)</scope>
</reference>
<reference key="14">
    <citation type="journal article" date="2003" name="Mol. Cell. Biochem.">
        <title>Human Aurora-B binds to a proteasome alpha-subunit HC8 and undergoes degradation in a proteasome-dependent manner.</title>
        <authorList>
            <person name="Shu F."/>
            <person name="Guo S."/>
            <person name="Dang Y."/>
            <person name="Qi M."/>
            <person name="Zhou G."/>
            <person name="Guo Z."/>
            <person name="Zhang Y."/>
            <person name="Wu C."/>
            <person name="Zhao S."/>
            <person name="Yu L."/>
        </authorList>
    </citation>
    <scope>INTERACTION WITH AURKB</scope>
</reference>
<reference key="15">
    <citation type="journal article" date="2004" name="Biomacromolecules">
        <title>20S proteasome prevents aggregation of heat-denatured proteins without PA700 regulatory subcomplex like a molecular chaperone.</title>
        <authorList>
            <person name="Yano M."/>
            <person name="Koumoto Y."/>
            <person name="Kanesaki Y."/>
            <person name="Wu X."/>
            <person name="Kido H."/>
        </authorList>
    </citation>
    <scope>FUNCTION</scope>
</reference>
<reference key="16">
    <citation type="journal article" date="2005" name="Curr. Biol.">
        <title>HSJ1 is a neuronal shuttling factor for the sorting of chaperone clients to the proteasome.</title>
        <authorList>
            <person name="Westhoff B."/>
            <person name="Chapple J.P."/>
            <person name="van der Spuy J."/>
            <person name="Hoehfeld J."/>
            <person name="Cheetham M.E."/>
        </authorList>
    </citation>
    <scope>INTERACTION WITH DNAJB2</scope>
</reference>
<reference key="17">
    <citation type="journal article" date="2005" name="J. Gen. Virol.">
        <title>Epstein-Barr virus EBNA3 proteins bind to the C8/alpha7 subunit of the 20S proteasome and are degraded by 20S proteasomes in vitro, but are very stable in latently infected B cells.</title>
        <authorList>
            <person name="Touitou R."/>
            <person name="O'Nions J."/>
            <person name="Heaney J."/>
            <person name="Allday M.J."/>
        </authorList>
    </citation>
    <scope>INTERACTION WITH EBNA3 (MICROBIAL INFECTION)</scope>
</reference>
<reference key="18">
    <citation type="journal article" date="2005" name="Mol. Cell">
        <title>MDM2 promotes proteasome-dependent ubiquitin-independent degradation of retinoblastoma protein.</title>
        <authorList>
            <person name="Sdek P."/>
            <person name="Ying H."/>
            <person name="Chang D.L."/>
            <person name="Qiu W."/>
            <person name="Zheng H."/>
            <person name="Touitou R."/>
            <person name="Allday M.J."/>
            <person name="Xiao Z.X."/>
        </authorList>
    </citation>
    <scope>INTERACTION WITH MDM2 AND RB1</scope>
</reference>
<reference key="19">
    <citation type="journal article" date="2005" name="Nat. Biotechnol.">
        <title>Immunoaffinity profiling of tyrosine phosphorylation in cancer cells.</title>
        <authorList>
            <person name="Rush J."/>
            <person name="Moritz A."/>
            <person name="Lee K.A."/>
            <person name="Guo A."/>
            <person name="Goss V.L."/>
            <person name="Spek E.J."/>
            <person name="Zhang H."/>
            <person name="Zha X.-M."/>
            <person name="Polakiewicz R.D."/>
            <person name="Comb M.J."/>
        </authorList>
    </citation>
    <scope>IDENTIFICATION BY MASS SPECTROMETRY [LARGE SCALE ANALYSIS]</scope>
</reference>
<reference key="20">
    <citation type="journal article" date="2006" name="Cell">
        <title>Global, in vivo, and site-specific phosphorylation dynamics in signaling networks.</title>
        <authorList>
            <person name="Olsen J.V."/>
            <person name="Blagoev B."/>
            <person name="Gnad F."/>
            <person name="Macek B."/>
            <person name="Kumar C."/>
            <person name="Mortensen P."/>
            <person name="Mann M."/>
        </authorList>
    </citation>
    <scope>PHOSPHORYLATION [LARGE SCALE ANALYSIS] AT SER-250</scope>
    <scope>IDENTIFICATION BY MASS SPECTROMETRY [LARGE SCALE ANALYSIS]</scope>
    <source>
        <tissue>Cervix carcinoma</tissue>
    </source>
</reference>
<reference key="21">
    <citation type="journal article" date="2006" name="Free Radic. Res.">
        <title>Chemical structure-dependent gene expression of proteasome subunits via regulation of the antioxidant response element.</title>
        <authorList>
            <person name="Takabe W."/>
            <person name="Matsukawa N."/>
            <person name="Kodama T."/>
            <person name="Tanaka K."/>
            <person name="Noguchi N."/>
        </authorList>
    </citation>
    <scope>INDUCTION BY BO-653</scope>
</reference>
<reference key="22">
    <citation type="journal article" date="2006" name="Nat. Biotechnol.">
        <title>A probability-based approach for high-throughput protein phosphorylation analysis and site localization.</title>
        <authorList>
            <person name="Beausoleil S.A."/>
            <person name="Villen J."/>
            <person name="Gerber S.A."/>
            <person name="Rush J."/>
            <person name="Gygi S.P."/>
        </authorList>
    </citation>
    <scope>PHOSPHORYLATION [LARGE SCALE ANALYSIS] AT SER-250</scope>
    <scope>IDENTIFICATION BY MASS SPECTROMETRY [LARGE SCALE ANALYSIS]</scope>
    <source>
        <tissue>Cervix carcinoma</tissue>
    </source>
</reference>
<reference key="23">
    <citation type="journal article" date="2007" name="Biochemistry">
        <title>Mass spectrometric characterization of the affinity-purified human 26S proteasome complex.</title>
        <authorList>
            <person name="Wang X."/>
            <person name="Chen C.-F."/>
            <person name="Baker P.R."/>
            <person name="Chen P.-L."/>
            <person name="Kaiser P."/>
            <person name="Huang L."/>
        </authorList>
    </citation>
    <scope>PHOSPHORYLATION [LARGE SCALE ANALYSIS] AT SER-243 AND SER-250</scope>
    <scope>IDENTIFICATION BY MASS SPECTROMETRY [LARGE SCALE ANALYSIS]</scope>
    <source>
        <tissue>Embryonic kidney</tissue>
    </source>
</reference>
<reference key="24">
    <citation type="journal article" date="2007" name="Electrophoresis">
        <title>Toward a global characterization of the phosphoproteome in prostate cancer cells: identification of phosphoproteins in the LNCaP cell line.</title>
        <authorList>
            <person name="Giorgianni F."/>
            <person name="Zhao Y."/>
            <person name="Desiderio D.M."/>
            <person name="Beranova-Giorgianni S."/>
        </authorList>
    </citation>
    <scope>PHOSPHORYLATION [LARGE SCALE ANALYSIS] AT SER-250</scope>
    <scope>IDENTIFICATION BY MASS SPECTROMETRY [LARGE SCALE ANALYSIS]</scope>
    <source>
        <tissue>Prostate cancer</tissue>
    </source>
</reference>
<reference key="25">
    <citation type="journal article" date="2007" name="Prostaglandins Other Lipid Mediat.">
        <title>Low expression of cell-surface thromboxane A2 receptor beta-isoform through the negative regulation of its membrane traffic by proteasomes.</title>
        <authorList>
            <person name="Sasaki M."/>
            <person name="Sukegawa J."/>
            <person name="Miyosawa K."/>
            <person name="Yanagisawa T."/>
            <person name="Ohkubo S."/>
            <person name="Nakahata N."/>
        </authorList>
    </citation>
    <scope>FUNCTION</scope>
    <scope>INTERACTION WITH TBXA2R</scope>
</reference>
<reference key="26">
    <citation type="journal article" date="2008" name="J. Proteome Res.">
        <title>Phosphorylation analysis of primary human T lymphocytes using sequential IMAC and titanium oxide enrichment.</title>
        <authorList>
            <person name="Carrascal M."/>
            <person name="Ovelleiro D."/>
            <person name="Casas V."/>
            <person name="Gay M."/>
            <person name="Abian J."/>
        </authorList>
    </citation>
    <scope>PHOSPHORYLATION [LARGE SCALE ANALYSIS] AT SER-250</scope>
    <scope>IDENTIFICATION BY MASS SPECTROMETRY [LARGE SCALE ANALYSIS]</scope>
    <source>
        <tissue>T-cell</tissue>
    </source>
</reference>
<reference key="27">
    <citation type="journal article" date="2008" name="Proc. Natl. Acad. Sci. U.S.A.">
        <title>A quantitative atlas of mitotic phosphorylation.</title>
        <authorList>
            <person name="Dephoure N."/>
            <person name="Zhou C."/>
            <person name="Villen J."/>
            <person name="Beausoleil S.A."/>
            <person name="Bakalarski C.E."/>
            <person name="Elledge S.J."/>
            <person name="Gygi S.P."/>
        </authorList>
    </citation>
    <scope>PHOSPHORYLATION [LARGE SCALE ANALYSIS] AT SER-250</scope>
    <scope>IDENTIFICATION BY MASS SPECTROMETRY [LARGE SCALE ANALYSIS]</scope>
    <source>
        <tissue>Cervix carcinoma</tissue>
    </source>
</reference>
<reference key="28">
    <citation type="journal article" date="2008" name="Proteomics">
        <title>Large-scale phosphoproteome analysis of human liver tissue by enrichment and fractionation of phosphopeptides with strong anion exchange chromatography.</title>
        <authorList>
            <person name="Han G."/>
            <person name="Ye M."/>
            <person name="Zhou H."/>
            <person name="Jiang X."/>
            <person name="Feng S."/>
            <person name="Jiang X."/>
            <person name="Tian R."/>
            <person name="Wan D."/>
            <person name="Zou H."/>
            <person name="Gu J."/>
        </authorList>
    </citation>
    <scope>PHOSPHORYLATION [LARGE SCALE ANALYSIS] AT SER-250</scope>
    <scope>IDENTIFICATION BY MASS SPECTROMETRY [LARGE SCALE ANALYSIS]</scope>
    <source>
        <tissue>Liver</tissue>
    </source>
</reference>
<reference key="29">
    <citation type="journal article" date="2009" name="Anal. Chem.">
        <title>Lys-N and trypsin cover complementary parts of the phosphoproteome in a refined SCX-based approach.</title>
        <authorList>
            <person name="Gauci S."/>
            <person name="Helbig A.O."/>
            <person name="Slijper M."/>
            <person name="Krijgsveld J."/>
            <person name="Heck A.J."/>
            <person name="Mohammed S."/>
        </authorList>
    </citation>
    <scope>ACETYLATION [LARGE SCALE ANALYSIS] AT SER-2</scope>
    <scope>CLEAVAGE OF INITIATOR METHIONINE [LARGE SCALE ANALYSIS]</scope>
    <scope>IDENTIFICATION BY MASS SPECTROMETRY [LARGE SCALE ANALYSIS]</scope>
</reference>
<reference key="30">
    <citation type="journal article" date="2009" name="J. Virol.">
        <title>Ubiquitin-independent degradation of hepatitis C virus F protein.</title>
        <authorList>
            <person name="Yuksek K."/>
            <person name="Chen W.-L."/>
            <person name="Chien D."/>
            <person name="Ou J.-H."/>
        </authorList>
    </citation>
    <scope>INTERACTION WITH HCV F PROTEIN (MICROBIAL INFECTION)</scope>
</reference>
<reference key="31">
    <citation type="journal article" date="2009" name="Sci. Signal.">
        <title>Quantitative phosphoproteomic analysis of T cell receptor signaling reveals system-wide modulation of protein-protein interactions.</title>
        <authorList>
            <person name="Mayya V."/>
            <person name="Lundgren D.H."/>
            <person name="Hwang S.-I."/>
            <person name="Rezaul K."/>
            <person name="Wu L."/>
            <person name="Eng J.K."/>
            <person name="Rodionov V."/>
            <person name="Han D.K."/>
        </authorList>
    </citation>
    <scope>PHOSPHORYLATION [LARGE SCALE ANALYSIS] AT SER-250</scope>
    <scope>IDENTIFICATION BY MASS SPECTROMETRY [LARGE SCALE ANALYSIS]</scope>
    <source>
        <tissue>Leukemic T-cell</tissue>
    </source>
</reference>
<reference key="32">
    <citation type="journal article" date="2009" name="Science">
        <title>Lysine acetylation targets protein complexes and co-regulates major cellular functions.</title>
        <authorList>
            <person name="Choudhary C."/>
            <person name="Kumar C."/>
            <person name="Gnad F."/>
            <person name="Nielsen M.L."/>
            <person name="Rehman M."/>
            <person name="Walther T.C."/>
            <person name="Olsen J.V."/>
            <person name="Mann M."/>
        </authorList>
    </citation>
    <scope>ACETYLATION [LARGE SCALE ANALYSIS] AT LYS-57; LYS-206 AND LYS-230</scope>
    <scope>IDENTIFICATION BY MASS SPECTROMETRY [LARGE SCALE ANALYSIS]</scope>
</reference>
<reference key="33">
    <citation type="journal article" date="2010" name="Sci. Signal.">
        <title>Quantitative phosphoproteomics reveals widespread full phosphorylation site occupancy during mitosis.</title>
        <authorList>
            <person name="Olsen J.V."/>
            <person name="Vermeulen M."/>
            <person name="Santamaria A."/>
            <person name="Kumar C."/>
            <person name="Miller M.L."/>
            <person name="Jensen L.J."/>
            <person name="Gnad F."/>
            <person name="Cox J."/>
            <person name="Jensen T.S."/>
            <person name="Nigg E.A."/>
            <person name="Brunak S."/>
            <person name="Mann M."/>
        </authorList>
    </citation>
    <scope>PHOSPHORYLATION [LARGE SCALE ANALYSIS] AT SER-250</scope>
    <scope>IDENTIFICATION BY MASS SPECTROMETRY [LARGE SCALE ANALYSIS]</scope>
    <source>
        <tissue>Cervix carcinoma</tissue>
    </source>
</reference>
<reference key="34">
    <citation type="journal article" date="2011" name="BMC Syst. Biol.">
        <title>Initial characterization of the human central proteome.</title>
        <authorList>
            <person name="Burkard T.R."/>
            <person name="Planyavsky M."/>
            <person name="Kaupe I."/>
            <person name="Breitwieser F.P."/>
            <person name="Buerckstuemmer T."/>
            <person name="Bennett K.L."/>
            <person name="Superti-Furga G."/>
            <person name="Colinge J."/>
        </authorList>
    </citation>
    <scope>IDENTIFICATION BY MASS SPECTROMETRY [LARGE SCALE ANALYSIS]</scope>
</reference>
<reference key="35">
    <citation type="journal article" date="2011" name="Sci. Signal.">
        <title>System-wide temporal characterization of the proteome and phosphoproteome of human embryonic stem cell differentiation.</title>
        <authorList>
            <person name="Rigbolt K.T."/>
            <person name="Prokhorova T.A."/>
            <person name="Akimov V."/>
            <person name="Henningsen J."/>
            <person name="Johansen P.T."/>
            <person name="Kratchmarova I."/>
            <person name="Kassem M."/>
            <person name="Mann M."/>
            <person name="Olsen J.V."/>
            <person name="Blagoev B."/>
        </authorList>
    </citation>
    <scope>PHOSPHORYLATION [LARGE SCALE ANALYSIS] AT SER-250</scope>
    <scope>IDENTIFICATION BY MASS SPECTROMETRY [LARGE SCALE ANALYSIS]</scope>
</reference>
<reference key="36">
    <citation type="journal article" date="2012" name="Mol. Cell. Proteomics">
        <title>Comparative large-scale characterisation of plant vs. mammal proteins reveals similar and idiosyncratic N-alpha acetylation features.</title>
        <authorList>
            <person name="Bienvenut W.V."/>
            <person name="Sumpton D."/>
            <person name="Martinez A."/>
            <person name="Lilla S."/>
            <person name="Espagne C."/>
            <person name="Meinnel T."/>
            <person name="Giglione C."/>
        </authorList>
    </citation>
    <scope>ACETYLATION [LARGE SCALE ANALYSIS] AT SER-2</scope>
    <scope>CLEAVAGE OF INITIATOR METHIONINE [LARGE SCALE ANALYSIS]</scope>
    <scope>IDENTIFICATION BY MASS SPECTROMETRY [LARGE SCALE ANALYSIS]</scope>
</reference>
<reference key="37">
    <citation type="journal article" date="2012" name="Proc. Natl. Acad. Sci. U.S.A.">
        <title>N-terminal acetylome analyses and functional insights of the N-terminal acetyltransferase NatB.</title>
        <authorList>
            <person name="Van Damme P."/>
            <person name="Lasa M."/>
            <person name="Polevoda B."/>
            <person name="Gazquez C."/>
            <person name="Elosegui-Artola A."/>
            <person name="Kim D.S."/>
            <person name="De Juan-Pardo E."/>
            <person name="Demeyer K."/>
            <person name="Hole K."/>
            <person name="Larrea E."/>
            <person name="Timmerman E."/>
            <person name="Prieto J."/>
            <person name="Arnesen T."/>
            <person name="Sherman F."/>
            <person name="Gevaert K."/>
            <person name="Aldabe R."/>
        </authorList>
    </citation>
    <scope>ACETYLATION [LARGE SCALE ANALYSIS] AT SER-2</scope>
    <scope>CLEAVAGE OF INITIATOR METHIONINE [LARGE SCALE ANALYSIS]</scope>
    <scope>IDENTIFICATION BY MASS SPECTROMETRY [LARGE SCALE ANALYSIS]</scope>
</reference>
<reference key="38">
    <citation type="journal article" date="2013" name="Annu. Rev. Biochem.">
        <title>Molecular architecture and assembly of the eukaryotic proteasome.</title>
        <authorList>
            <person name="Tomko R.J. Jr."/>
            <person name="Hochstrasser M."/>
        </authorList>
    </citation>
    <scope>NOMENCLATURE</scope>
</reference>
<reference key="39">
    <citation type="journal article" date="2013" name="J. Proteome Res.">
        <title>Toward a comprehensive characterization of a human cancer cell phosphoproteome.</title>
        <authorList>
            <person name="Zhou H."/>
            <person name="Di Palma S."/>
            <person name="Preisinger C."/>
            <person name="Peng M."/>
            <person name="Polat A.N."/>
            <person name="Heck A.J."/>
            <person name="Mohammed S."/>
        </authorList>
    </citation>
    <scope>PHOSPHORYLATION [LARGE SCALE ANALYSIS] AT SER-243 AND SER-250</scope>
    <scope>IDENTIFICATION BY MASS SPECTROMETRY [LARGE SCALE ANALYSIS]</scope>
    <source>
        <tissue>Cervix carcinoma</tissue>
        <tissue>Erythroleukemia</tissue>
    </source>
</reference>
<reference key="40">
    <citation type="journal article" date="2014" name="J. Proteomics">
        <title>An enzyme assisted RP-RPLC approach for in-depth analysis of human liver phosphoproteome.</title>
        <authorList>
            <person name="Bian Y."/>
            <person name="Song C."/>
            <person name="Cheng K."/>
            <person name="Dong M."/>
            <person name="Wang F."/>
            <person name="Huang J."/>
            <person name="Sun D."/>
            <person name="Wang L."/>
            <person name="Ye M."/>
            <person name="Zou H."/>
        </authorList>
    </citation>
    <scope>PHOSPHORYLATION [LARGE SCALE ANALYSIS] AT SER-250</scope>
    <scope>IDENTIFICATION BY MASS SPECTROMETRY [LARGE SCALE ANALYSIS]</scope>
    <source>
        <tissue>Liver</tissue>
    </source>
</reference>
<reference key="41">
    <citation type="journal article" date="2016" name="Biol. Chem.">
        <title>Human 20S proteasome activity towards fluorogenic peptides of various chain lengths.</title>
        <authorList>
            <person name="Rut W."/>
            <person name="Drag M."/>
        </authorList>
    </citation>
    <scope>FUNCTION</scope>
    <scope>CATALYTIC ACTIVITY</scope>
</reference>
<reference key="42">
    <citation type="journal article" date="2015" name="Nat. Commun.">
        <title>Cryo-EM reveals the conformation of a substrate analogue in the human 20S proteasome core.</title>
        <authorList>
            <person name="da Fonseca P.C."/>
            <person name="Morris E.P."/>
        </authorList>
    </citation>
    <scope>STRUCTURE BY ELECTRON MICROSCOPY (3.50 ANGSTROMS)</scope>
    <scope>SUBUNIT</scope>
</reference>
<reference key="43">
    <citation type="journal article" date="2015" name="Sci. Rep.">
        <title>Disassembly of the self-assembled, double-ring structure of proteasome alpha7 homo-tetradecamer by alpha6.</title>
        <authorList>
            <person name="Ishii K."/>
            <person name="Noda M."/>
            <person name="Yagi H."/>
            <person name="Thammaporn R."/>
            <person name="Seetaha S."/>
            <person name="Satoh T."/>
            <person name="Kato K."/>
            <person name="Uchiyama S."/>
        </authorList>
    </citation>
    <scope>X-RAY CRYSTALLOGRAPHY (3.75 ANGSTROMS)</scope>
    <scope>SUBUNIT</scope>
</reference>
<reference key="44">
    <citation type="journal article" date="2015" name="Structure">
        <title>Crystal structure of the human 20S proteasome in complex with carfilzomib.</title>
        <authorList>
            <person name="Harshbarger W."/>
            <person name="Miller C."/>
            <person name="Diedrich C."/>
            <person name="Sacchettini J."/>
        </authorList>
    </citation>
    <scope>X-RAY CRYSTALLOGRAPHY (2.60 ANGSTROMS) OF 2-246</scope>
    <scope>SUBUNIT</scope>
</reference>
<reference key="45">
    <citation type="journal article" date="2016" name="Nat. Struct. Mol. Biol.">
        <title>An atomic structure of the human 26S proteasome.</title>
        <authorList>
            <person name="Huang X."/>
            <person name="Luan B."/>
            <person name="Wu J."/>
            <person name="Shi Y."/>
        </authorList>
    </citation>
    <scope>STRUCTURE BY ELECTRON MICROSCOPY (3.50 ANGSTROMS)</scope>
    <scope>SUBUNIT</scope>
</reference>
<reference key="46">
    <citation type="journal article" date="2016" name="Proc. Natl. Acad. Sci. U.S.A.">
        <title>Structure of the human 26S proteasome at a resolution of 3.9 Aa.</title>
        <authorList>
            <person name="Schweitzer A."/>
            <person name="Aufderheide A."/>
            <person name="Rudack T."/>
            <person name="Beck F."/>
            <person name="Pfeifer G."/>
            <person name="Plitzko J.M."/>
            <person name="Sakata E."/>
            <person name="Schulten K."/>
            <person name="Foerster F."/>
            <person name="Baumeister W."/>
        </authorList>
    </citation>
    <scope>STRUCTURE BY ELECTRON MICROSCOPY (4.02 ANGSTROMS)</scope>
    <scope>SUBUNIT</scope>
</reference>
<reference key="47">
    <citation type="journal article" date="2016" name="Science">
        <title>The inhibition mechanism of human 20S proteasomes enables next-generation inhibitor design.</title>
        <authorList>
            <person name="Schrader J."/>
            <person name="Henneberg F."/>
            <person name="Mata R.A."/>
            <person name="Tittmann K."/>
            <person name="Schneider T.R."/>
            <person name="Stark H."/>
            <person name="Bourenkov G."/>
            <person name="Chari A."/>
        </authorList>
    </citation>
    <scope>X-RAY CRYSTALLOGRAPHY (1.80 ANGSTROMS)</scope>
    <scope>SUBUNIT</scope>
</reference>
<reference key="48">
    <citation type="journal article" date="2021" name="Nature">
        <title>AKIRIN2 controls the nuclear import of proteasomes in vertebrates.</title>
        <authorList>
            <person name="de Almeida M."/>
            <person name="Hinterndorfer M."/>
            <person name="Brunner H."/>
            <person name="Grishkovskaya I."/>
            <person name="Singh K."/>
            <person name="Schleiffer A."/>
            <person name="Jude J."/>
            <person name="Deswal S."/>
            <person name="Kalis R."/>
            <person name="Vunjak M."/>
            <person name="Lendl T."/>
            <person name="Imre R."/>
            <person name="Roitinger E."/>
            <person name="Neumann T."/>
            <person name="Kandolf S."/>
            <person name="Schutzbier M."/>
            <person name="Mechtler K."/>
            <person name="Versteeg G.A."/>
            <person name="Haselbach D."/>
            <person name="Zuber J."/>
        </authorList>
    </citation>
    <scope>STRUCTURE BY ELECTRON MICROSCOPY (2.80 ANGSTROMS) IN COMPLEX WITH AKIRIN2</scope>
    <scope>SUBUNIT</scope>
    <scope>SUBCELLULAR LOCATION</scope>
</reference>
<reference key="49">
    <citation type="journal article" date="2015" name="J. Clin. Invest.">
        <title>Additive loss-of-function proteasome subunit mutations in CANDLE/PRAAS patients promote type I IFN production.</title>
        <authorList>
            <person name="Brehm A."/>
            <person name="Liu Y."/>
            <person name="Sheikh A."/>
            <person name="Marrero B."/>
            <person name="Omoyinmi E."/>
            <person name="Zhou Q."/>
            <person name="Montealegre G."/>
            <person name="Biancotto A."/>
            <person name="Reinhardt A."/>
            <person name="Almeida de Jesus A."/>
            <person name="Pelletier M."/>
            <person name="Tsai W.L."/>
            <person name="Remmers E.F."/>
            <person name="Kardava L."/>
            <person name="Hill S."/>
            <person name="Kim H."/>
            <person name="Lachmann H.J."/>
            <person name="Megarbane A."/>
            <person name="Chae J.J."/>
            <person name="Brady J."/>
            <person name="Castillo R.D."/>
            <person name="Brown D."/>
            <person name="Casano A.V."/>
            <person name="Gao L."/>
            <person name="Chapelle D."/>
            <person name="Huang Y."/>
            <person name="Stone D."/>
            <person name="Chen Y."/>
            <person name="Sotzny F."/>
            <person name="Lee C.C."/>
            <person name="Kastner D.L."/>
            <person name="Torrelo A."/>
            <person name="Zlotogorski A."/>
            <person name="Moir S."/>
            <person name="Gadina M."/>
            <person name="McCoy P."/>
            <person name="Wesley R."/>
            <person name="Rother K.I."/>
            <person name="Hildebrand P.W."/>
            <person name="Brogan P."/>
            <person name="Krueger E."/>
            <person name="Aksentijevich I."/>
            <person name="Goldbach-Mansky R."/>
        </authorList>
    </citation>
    <scope>VARIANT ARG-233 DEL</scope>
    <scope>CHARACTERIZATION OF VARIANT ARG-233 DEL</scope>
</reference>
<reference key="50">
    <citation type="journal article" date="2016" name="J. Clin. Invest.">
        <authorList>
            <person name="Brehm A."/>
            <person name="Liu Y."/>
            <person name="Sheikh A."/>
            <person name="Marrero B."/>
            <person name="Omoyinmi E."/>
            <person name="Zhou Q."/>
            <person name="Montealegre G."/>
            <person name="Biancotto A."/>
            <person name="Reinhardt A."/>
            <person name="de Jesus A.A."/>
            <person name="Pelletier M."/>
            <person name="Tsai W.L."/>
            <person name="Remmers E.F."/>
            <person name="Kardava L."/>
            <person name="Hill S."/>
            <person name="Kim H."/>
            <person name="Lachmann H.J."/>
            <person name="Megarbane A."/>
            <person name="Chae J.J."/>
            <person name="Brady J."/>
            <person name="Castillo R.D."/>
            <person name="Brown D."/>
            <person name="Casano A.V."/>
            <person name="Gao L."/>
            <person name="Chapelle D."/>
            <person name="Huang Y."/>
            <person name="Stone D."/>
            <person name="Chen Y."/>
            <person name="Sotzny F."/>
            <person name="Lee C.C."/>
            <person name="Kastner D.L."/>
            <person name="Torrelo A."/>
            <person name="Zlotogorski A."/>
            <person name="Moir S."/>
            <person name="Gadina M."/>
            <person name="McCoy P."/>
            <person name="Wesley R."/>
            <person name="Rother K.I."/>
            <person name="Hildebrand P.W."/>
            <person name="Brogan P."/>
            <person name="Krueger E."/>
            <person name="Aksentijevich I."/>
            <person name="Goldbach-Mansky R."/>
        </authorList>
    </citation>
    <scope>ERRATUM OF PUBMED:26524591</scope>
</reference>
<dbReference type="EMBL" id="D00762">
    <property type="protein sequence ID" value="BAA00659.1"/>
    <property type="molecule type" value="mRNA"/>
</dbReference>
<dbReference type="EMBL" id="BT006711">
    <property type="protein sequence ID" value="AAP35357.1"/>
    <property type="molecule type" value="mRNA"/>
</dbReference>
<dbReference type="EMBL" id="BT019715">
    <property type="protein sequence ID" value="AAV38520.1"/>
    <property type="molecule type" value="mRNA"/>
</dbReference>
<dbReference type="EMBL" id="AK315158">
    <property type="protein sequence ID" value="BAG37603.1"/>
    <property type="molecule type" value="mRNA"/>
</dbReference>
<dbReference type="EMBL" id="CH471061">
    <property type="protein sequence ID" value="EAW80719.1"/>
    <property type="molecule type" value="Genomic_DNA"/>
</dbReference>
<dbReference type="EMBL" id="BC005265">
    <property type="protein sequence ID" value="AAH05265.1"/>
    <property type="molecule type" value="mRNA"/>
</dbReference>
<dbReference type="EMBL" id="BC029402">
    <property type="protein sequence ID" value="AAH29402.1"/>
    <property type="molecule type" value="mRNA"/>
</dbReference>
<dbReference type="EMBL" id="BC038990">
    <property type="protein sequence ID" value="AAH38990.1"/>
    <property type="molecule type" value="mRNA"/>
</dbReference>
<dbReference type="CCDS" id="CCDS45113.1">
    <molecule id="P25788-2"/>
</dbReference>
<dbReference type="CCDS" id="CCDS9731.1">
    <molecule id="P25788-1"/>
</dbReference>
<dbReference type="PIR" id="S15971">
    <property type="entry name" value="SNHUC8"/>
</dbReference>
<dbReference type="RefSeq" id="NP_002779.1">
    <molecule id="P25788-1"/>
    <property type="nucleotide sequence ID" value="NM_002788.4"/>
</dbReference>
<dbReference type="RefSeq" id="NP_687033.1">
    <molecule id="P25788-2"/>
    <property type="nucleotide sequence ID" value="NM_152132.3"/>
</dbReference>
<dbReference type="PDB" id="4R3O">
    <property type="method" value="X-ray"/>
    <property type="resolution" value="2.60 A"/>
    <property type="chains" value="G/U=2-246"/>
</dbReference>
<dbReference type="PDB" id="4R67">
    <property type="method" value="X-ray"/>
    <property type="resolution" value="2.89 A"/>
    <property type="chains" value="G/U/i/w=2-246"/>
</dbReference>
<dbReference type="PDB" id="5A0Q">
    <property type="method" value="EM"/>
    <property type="resolution" value="3.50 A"/>
    <property type="chains" value="G/U=1-255"/>
</dbReference>
<dbReference type="PDB" id="5DSV">
    <property type="method" value="X-ray"/>
    <property type="resolution" value="3.75 A"/>
    <property type="chains" value="A/B/C/D/E/F/G/H/I/J/K/L/M/N=1-255"/>
</dbReference>
<dbReference type="PDB" id="5GJQ">
    <property type="method" value="EM"/>
    <property type="resolution" value="4.50 A"/>
    <property type="chains" value="X/n=1-255"/>
</dbReference>
<dbReference type="PDB" id="5GJR">
    <property type="method" value="EM"/>
    <property type="resolution" value="3.50 A"/>
    <property type="chains" value="X/n=1-255"/>
</dbReference>
<dbReference type="PDB" id="5L4G">
    <property type="method" value="EM"/>
    <property type="resolution" value="4.02 A"/>
    <property type="chains" value="G/T=1-255"/>
</dbReference>
<dbReference type="PDB" id="5LE5">
    <property type="method" value="X-ray"/>
    <property type="resolution" value="1.80 A"/>
    <property type="chains" value="F/T=1-255"/>
</dbReference>
<dbReference type="PDB" id="5LEX">
    <property type="method" value="X-ray"/>
    <property type="resolution" value="2.20 A"/>
    <property type="chains" value="F/T=1-255"/>
</dbReference>
<dbReference type="PDB" id="5LEY">
    <property type="method" value="X-ray"/>
    <property type="resolution" value="1.90 A"/>
    <property type="chains" value="F/T=1-255"/>
</dbReference>
<dbReference type="PDB" id="5LEZ">
    <property type="method" value="X-ray"/>
    <property type="resolution" value="2.19 A"/>
    <property type="chains" value="F/T=1-255"/>
</dbReference>
<dbReference type="PDB" id="5LF0">
    <property type="method" value="X-ray"/>
    <property type="resolution" value="2.41 A"/>
    <property type="chains" value="F/T=1-255"/>
</dbReference>
<dbReference type="PDB" id="5LF1">
    <property type="method" value="X-ray"/>
    <property type="resolution" value="2.00 A"/>
    <property type="chains" value="F/T=1-255"/>
</dbReference>
<dbReference type="PDB" id="5LF3">
    <property type="method" value="X-ray"/>
    <property type="resolution" value="2.10 A"/>
    <property type="chains" value="F/T=1-255"/>
</dbReference>
<dbReference type="PDB" id="5LF4">
    <property type="method" value="X-ray"/>
    <property type="resolution" value="1.99 A"/>
    <property type="chains" value="F/T=1-255"/>
</dbReference>
<dbReference type="PDB" id="5LF6">
    <property type="method" value="X-ray"/>
    <property type="resolution" value="2.07 A"/>
    <property type="chains" value="F/T=1-255"/>
</dbReference>
<dbReference type="PDB" id="5LF7">
    <property type="method" value="X-ray"/>
    <property type="resolution" value="2.00 A"/>
    <property type="chains" value="F/T=1-255"/>
</dbReference>
<dbReference type="PDB" id="5LN3">
    <property type="method" value="EM"/>
    <property type="resolution" value="6.80 A"/>
    <property type="chains" value="G=1-255"/>
</dbReference>
<dbReference type="PDB" id="5M32">
    <property type="method" value="EM"/>
    <property type="resolution" value="3.80 A"/>
    <property type="chains" value="F/T=1-255"/>
</dbReference>
<dbReference type="PDB" id="5T0C">
    <property type="method" value="EM"/>
    <property type="resolution" value="3.80 A"/>
    <property type="chains" value="AM/BM=2-255"/>
</dbReference>
<dbReference type="PDB" id="5T0G">
    <property type="method" value="EM"/>
    <property type="resolution" value="4.40 A"/>
    <property type="chains" value="M=2-255"/>
</dbReference>
<dbReference type="PDB" id="5T0H">
    <property type="method" value="EM"/>
    <property type="resolution" value="6.80 A"/>
    <property type="chains" value="M=2-255"/>
</dbReference>
<dbReference type="PDB" id="5T0I">
    <property type="method" value="EM"/>
    <property type="resolution" value="8.00 A"/>
    <property type="chains" value="M=2-255"/>
</dbReference>
<dbReference type="PDB" id="5T0J">
    <property type="method" value="EM"/>
    <property type="resolution" value="8.00 A"/>
    <property type="chains" value="M=2-255"/>
</dbReference>
<dbReference type="PDB" id="5VFO">
    <property type="method" value="EM"/>
    <property type="resolution" value="3.50 A"/>
    <property type="chains" value="M/m=2-246"/>
</dbReference>
<dbReference type="PDB" id="5VFP">
    <property type="method" value="EM"/>
    <property type="resolution" value="4.20 A"/>
    <property type="chains" value="M/m=2-246"/>
</dbReference>
<dbReference type="PDB" id="5VFQ">
    <property type="method" value="EM"/>
    <property type="resolution" value="4.20 A"/>
    <property type="chains" value="M/m=2-246"/>
</dbReference>
<dbReference type="PDB" id="5VFR">
    <property type="method" value="EM"/>
    <property type="resolution" value="4.90 A"/>
    <property type="chains" value="M/m=2-246"/>
</dbReference>
<dbReference type="PDB" id="5VFS">
    <property type="method" value="EM"/>
    <property type="resolution" value="3.60 A"/>
    <property type="chains" value="M/m=2-246"/>
</dbReference>
<dbReference type="PDB" id="5VFT">
    <property type="method" value="EM"/>
    <property type="resolution" value="7.00 A"/>
    <property type="chains" value="M/m=2-246"/>
</dbReference>
<dbReference type="PDB" id="5VFU">
    <property type="method" value="EM"/>
    <property type="resolution" value="5.80 A"/>
    <property type="chains" value="M/m=2-246"/>
</dbReference>
<dbReference type="PDB" id="6AVO">
    <property type="method" value="EM"/>
    <property type="resolution" value="3.80 A"/>
    <property type="chains" value="J/Q=1-255"/>
</dbReference>
<dbReference type="PDB" id="6E5B">
    <property type="method" value="X-ray"/>
    <property type="resolution" value="2.77 A"/>
    <property type="chains" value="F/T=1-255"/>
</dbReference>
<dbReference type="PDB" id="6KWY">
    <property type="method" value="EM"/>
    <property type="resolution" value="2.72 A"/>
    <property type="chains" value="F/T=1-255"/>
</dbReference>
<dbReference type="PDB" id="6MSB">
    <property type="method" value="EM"/>
    <property type="resolution" value="3.00 A"/>
    <property type="chains" value="M/m=2-255"/>
</dbReference>
<dbReference type="PDB" id="6MSD">
    <property type="method" value="EM"/>
    <property type="resolution" value="3.20 A"/>
    <property type="chains" value="M/m=2-255"/>
</dbReference>
<dbReference type="PDB" id="6MSE">
    <property type="method" value="EM"/>
    <property type="resolution" value="3.30 A"/>
    <property type="chains" value="a=166-213"/>
</dbReference>
<dbReference type="PDB" id="6MSG">
    <property type="method" value="EM"/>
    <property type="resolution" value="3.50 A"/>
    <property type="chains" value="M/m=2-255"/>
</dbReference>
<dbReference type="PDB" id="6MSH">
    <property type="method" value="EM"/>
    <property type="resolution" value="3.60 A"/>
    <property type="chains" value="M/m=2-255"/>
</dbReference>
<dbReference type="PDB" id="6MSJ">
    <property type="method" value="EM"/>
    <property type="resolution" value="3.30 A"/>
    <property type="chains" value="M/m=2-255"/>
</dbReference>
<dbReference type="PDB" id="6MSK">
    <property type="method" value="EM"/>
    <property type="resolution" value="3.20 A"/>
    <property type="chains" value="M/m=2-255"/>
</dbReference>
<dbReference type="PDB" id="6R70">
    <property type="method" value="EM"/>
    <property type="resolution" value="3.50 A"/>
    <property type="chains" value="F/T=6-245"/>
</dbReference>
<dbReference type="PDB" id="6REY">
    <property type="method" value="EM"/>
    <property type="resolution" value="3.00 A"/>
    <property type="chains" value="G/U=1-255"/>
</dbReference>
<dbReference type="PDB" id="6RGQ">
    <property type="method" value="EM"/>
    <property type="resolution" value="2.60 A"/>
    <property type="chains" value="G/U=1-255"/>
</dbReference>
<dbReference type="PDB" id="6WJD">
    <property type="method" value="EM"/>
    <property type="resolution" value="4.80 A"/>
    <property type="chains" value="M/m=2-255"/>
</dbReference>
<dbReference type="PDB" id="6WJN">
    <property type="method" value="EM"/>
    <property type="resolution" value="5.70 A"/>
    <property type="chains" value="M/m=2-246"/>
</dbReference>
<dbReference type="PDB" id="6XMJ">
    <property type="method" value="EM"/>
    <property type="resolution" value="3.00 A"/>
    <property type="chains" value="G=2-246"/>
</dbReference>
<dbReference type="PDB" id="7AWE">
    <property type="method" value="X-ray"/>
    <property type="resolution" value="2.29 A"/>
    <property type="chains" value="G/U=5-246"/>
</dbReference>
<dbReference type="PDB" id="7B12">
    <property type="method" value="X-ray"/>
    <property type="resolution" value="2.43 A"/>
    <property type="chains" value="G/U=3-246"/>
</dbReference>
<dbReference type="PDB" id="7E55">
    <property type="method" value="EM"/>
    <property type="resolution" value="5.90 A"/>
    <property type="chains" value="A=1-255"/>
</dbReference>
<dbReference type="PDB" id="7LXV">
    <property type="method" value="EM"/>
    <property type="resolution" value="3.40 A"/>
    <property type="chains" value="F/T=1-255"/>
</dbReference>
<dbReference type="PDB" id="7NAN">
    <property type="method" value="EM"/>
    <property type="resolution" value="2.80 A"/>
    <property type="chains" value="F/T=1-255"/>
</dbReference>
<dbReference type="PDB" id="7NAO">
    <property type="method" value="EM"/>
    <property type="resolution" value="2.90 A"/>
    <property type="chains" value="F/T=1-255"/>
</dbReference>
<dbReference type="PDB" id="7NAP">
    <property type="method" value="EM"/>
    <property type="resolution" value="3.20 A"/>
    <property type="chains" value="F/T=1-255"/>
</dbReference>
<dbReference type="PDB" id="7NAQ">
    <property type="method" value="EM"/>
    <property type="resolution" value="3.20 A"/>
    <property type="chains" value="F/T=1-255"/>
</dbReference>
<dbReference type="PDB" id="7NHT">
    <property type="method" value="EM"/>
    <property type="resolution" value="2.80 A"/>
    <property type="chains" value="F=1-255"/>
</dbReference>
<dbReference type="PDB" id="7PG9">
    <property type="method" value="EM"/>
    <property type="resolution" value="3.70 A"/>
    <property type="chains" value="G/U=1-255"/>
</dbReference>
<dbReference type="PDB" id="7QXN">
    <property type="method" value="EM"/>
    <property type="resolution" value="3.70 A"/>
    <property type="chains" value="M/m=2-255"/>
</dbReference>
<dbReference type="PDB" id="7QXP">
    <property type="method" value="EM"/>
    <property type="resolution" value="3.60 A"/>
    <property type="chains" value="M/m=2-255"/>
</dbReference>
<dbReference type="PDB" id="7QXU">
    <property type="method" value="EM"/>
    <property type="resolution" value="4.30 A"/>
    <property type="chains" value="M/m=2-255"/>
</dbReference>
<dbReference type="PDB" id="7QXW">
    <property type="method" value="EM"/>
    <property type="resolution" value="4.10 A"/>
    <property type="chains" value="M/m=2-255"/>
</dbReference>
<dbReference type="PDB" id="7QXX">
    <property type="method" value="EM"/>
    <property type="resolution" value="4.40 A"/>
    <property type="chains" value="M/m=2-255"/>
</dbReference>
<dbReference type="PDB" id="7QY7">
    <property type="method" value="EM"/>
    <property type="resolution" value="4.70 A"/>
    <property type="chains" value="M/m=2-255"/>
</dbReference>
<dbReference type="PDB" id="7QYA">
    <property type="method" value="EM"/>
    <property type="resolution" value="4.80 A"/>
    <property type="chains" value="M/m=2-255"/>
</dbReference>
<dbReference type="PDB" id="7QYB">
    <property type="method" value="EM"/>
    <property type="resolution" value="4.10 A"/>
    <property type="chains" value="M/m=2-255"/>
</dbReference>
<dbReference type="PDB" id="7V5G">
    <property type="method" value="EM"/>
    <property type="resolution" value="4.47 A"/>
    <property type="chains" value="U/b=1-255"/>
</dbReference>
<dbReference type="PDB" id="7V5M">
    <property type="method" value="EM"/>
    <property type="resolution" value="3.88 A"/>
    <property type="chains" value="G/U=1-255"/>
</dbReference>
<dbReference type="PDB" id="7W37">
    <property type="method" value="EM"/>
    <property type="resolution" value="3.00 A"/>
    <property type="chains" value="M/m=1-255"/>
</dbReference>
<dbReference type="PDB" id="7W38">
    <property type="method" value="EM"/>
    <property type="resolution" value="3.10 A"/>
    <property type="chains" value="M/m=1-255"/>
</dbReference>
<dbReference type="PDB" id="7W39">
    <property type="method" value="EM"/>
    <property type="resolution" value="3.20 A"/>
    <property type="chains" value="M/m=1-255"/>
</dbReference>
<dbReference type="PDB" id="7W3A">
    <property type="method" value="EM"/>
    <property type="resolution" value="3.50 A"/>
    <property type="chains" value="M/m=1-255"/>
</dbReference>
<dbReference type="PDB" id="7W3B">
    <property type="method" value="EM"/>
    <property type="resolution" value="3.60 A"/>
    <property type="chains" value="M/m=1-255"/>
</dbReference>
<dbReference type="PDB" id="7W3C">
    <property type="method" value="EM"/>
    <property type="resolution" value="3.40 A"/>
    <property type="chains" value="M/m=1-255"/>
</dbReference>
<dbReference type="PDB" id="7W3F">
    <property type="method" value="EM"/>
    <property type="resolution" value="3.30 A"/>
    <property type="chains" value="M/m=1-255"/>
</dbReference>
<dbReference type="PDB" id="7W3G">
    <property type="method" value="EM"/>
    <property type="resolution" value="3.20 A"/>
    <property type="chains" value="M/m=1-255"/>
</dbReference>
<dbReference type="PDB" id="7W3H">
    <property type="method" value="EM"/>
    <property type="resolution" value="3.20 A"/>
    <property type="chains" value="M/m=1-255"/>
</dbReference>
<dbReference type="PDB" id="7W3I">
    <property type="method" value="EM"/>
    <property type="resolution" value="3.50 A"/>
    <property type="chains" value="M/m=1-255"/>
</dbReference>
<dbReference type="PDB" id="7W3J">
    <property type="method" value="EM"/>
    <property type="resolution" value="3.50 A"/>
    <property type="chains" value="M/m=1-255"/>
</dbReference>
<dbReference type="PDB" id="7W3K">
    <property type="method" value="EM"/>
    <property type="resolution" value="3.60 A"/>
    <property type="chains" value="M/m=1-255"/>
</dbReference>
<dbReference type="PDB" id="7W3M">
    <property type="method" value="EM"/>
    <property type="resolution" value="3.50 A"/>
    <property type="chains" value="M/m=1-255"/>
</dbReference>
<dbReference type="PDB" id="8BZL">
    <property type="method" value="X-ray"/>
    <property type="resolution" value="2.14 A"/>
    <property type="chains" value="F/T=1-255"/>
</dbReference>
<dbReference type="PDB" id="8CVR">
    <property type="method" value="EM"/>
    <property type="resolution" value="2.70 A"/>
    <property type="chains" value="G/U=1-255"/>
</dbReference>
<dbReference type="PDB" id="8CVS">
    <property type="method" value="EM"/>
    <property type="resolution" value="3.10 A"/>
    <property type="chains" value="F/T=1-255"/>
</dbReference>
<dbReference type="PDB" id="8CVT">
    <property type="method" value="EM"/>
    <property type="resolution" value="3.00 A"/>
    <property type="chains" value="M/m=1-255"/>
</dbReference>
<dbReference type="PDB" id="8CXB">
    <property type="method" value="EM"/>
    <property type="resolution" value="2.90 A"/>
    <property type="chains" value="F/T=1-255"/>
</dbReference>
<dbReference type="PDB" id="8JRI">
    <property type="method" value="EM"/>
    <property type="resolution" value="3.40 A"/>
    <property type="chains" value="M=1-255"/>
</dbReference>
<dbReference type="PDB" id="8JRT">
    <property type="method" value="EM"/>
    <property type="resolution" value="3.60 A"/>
    <property type="chains" value="M=1-255"/>
</dbReference>
<dbReference type="PDB" id="8JTI">
    <property type="method" value="EM"/>
    <property type="resolution" value="3.80 A"/>
    <property type="chains" value="M=1-255"/>
</dbReference>
<dbReference type="PDB" id="8K0G">
    <property type="method" value="EM"/>
    <property type="resolution" value="3.80 A"/>
    <property type="chains" value="M=1-255"/>
</dbReference>
<dbReference type="PDB" id="8QYJ">
    <property type="method" value="EM"/>
    <property type="resolution" value="2.73 A"/>
    <property type="chains" value="F=1-255"/>
</dbReference>
<dbReference type="PDB" id="8QYL">
    <property type="method" value="EM"/>
    <property type="resolution" value="2.67 A"/>
    <property type="chains" value="F=1-255"/>
</dbReference>
<dbReference type="PDB" id="8QYM">
    <property type="method" value="EM"/>
    <property type="resolution" value="2.73 A"/>
    <property type="chains" value="F=1-255"/>
</dbReference>
<dbReference type="PDB" id="8QYN">
    <property type="method" value="EM"/>
    <property type="resolution" value="2.88 A"/>
    <property type="chains" value="F=1-255"/>
</dbReference>
<dbReference type="PDB" id="8QYO">
    <property type="method" value="EM"/>
    <property type="resolution" value="2.84 A"/>
    <property type="chains" value="F/T=1-255"/>
</dbReference>
<dbReference type="PDB" id="8QYS">
    <property type="method" value="EM"/>
    <property type="resolution" value="3.89 A"/>
    <property type="chains" value="F/W=5-245"/>
</dbReference>
<dbReference type="PDB" id="8QZ9">
    <property type="method" value="EM"/>
    <property type="resolution" value="2.95 A"/>
    <property type="chains" value="F=1-255"/>
</dbReference>
<dbReference type="PDB" id="8TM3">
    <property type="method" value="EM"/>
    <property type="resolution" value="3.00 A"/>
    <property type="chains" value="F=1-255"/>
</dbReference>
<dbReference type="PDB" id="8TM4">
    <property type="method" value="EM"/>
    <property type="resolution" value="3.00 A"/>
    <property type="chains" value="F=1-255"/>
</dbReference>
<dbReference type="PDB" id="8TM5">
    <property type="method" value="EM"/>
    <property type="resolution" value="3.00 A"/>
    <property type="chains" value="F=1-255"/>
</dbReference>
<dbReference type="PDB" id="8TM6">
    <property type="method" value="EM"/>
    <property type="resolution" value="2.80 A"/>
    <property type="chains" value="F/T=1-255"/>
</dbReference>
<dbReference type="PDB" id="8UD9">
    <property type="method" value="EM"/>
    <property type="resolution" value="2.04 A"/>
    <property type="chains" value="G/U=1-255"/>
</dbReference>
<dbReference type="PDB" id="8USB">
    <property type="method" value="EM"/>
    <property type="resolution" value="2.73 A"/>
    <property type="chains" value="M=1-255"/>
</dbReference>
<dbReference type="PDB" id="8USC">
    <property type="method" value="EM"/>
    <property type="resolution" value="3.10 A"/>
    <property type="chains" value="M=1-255"/>
</dbReference>
<dbReference type="PDB" id="8YIX">
    <property type="method" value="EM"/>
    <property type="resolution" value="2.91 A"/>
    <property type="chains" value="F=1-255"/>
</dbReference>
<dbReference type="PDB" id="8YIY">
    <property type="method" value="EM"/>
    <property type="resolution" value="3.41 A"/>
    <property type="chains" value="F/T=1-255"/>
</dbReference>
<dbReference type="PDB" id="8YIZ">
    <property type="method" value="EM"/>
    <property type="resolution" value="3.79 A"/>
    <property type="chains" value="F/T=1-255"/>
</dbReference>
<dbReference type="PDB" id="9E8G">
    <property type="method" value="EM"/>
    <property type="resolution" value="3.01 A"/>
    <property type="chains" value="M=1-255"/>
</dbReference>
<dbReference type="PDB" id="9E8H">
    <property type="method" value="EM"/>
    <property type="resolution" value="2.90 A"/>
    <property type="chains" value="M=1-255"/>
</dbReference>
<dbReference type="PDB" id="9E8I">
    <property type="method" value="EM"/>
    <property type="resolution" value="2.87 A"/>
    <property type="chains" value="M=1-255"/>
</dbReference>
<dbReference type="PDB" id="9E8J">
    <property type="method" value="EM"/>
    <property type="resolution" value="3.47 A"/>
    <property type="chains" value="M=1-255"/>
</dbReference>
<dbReference type="PDB" id="9E8K">
    <property type="method" value="EM"/>
    <property type="resolution" value="4.08 A"/>
    <property type="chains" value="M=1-255"/>
</dbReference>
<dbReference type="PDB" id="9E8L">
    <property type="method" value="EM"/>
    <property type="resolution" value="3.59 A"/>
    <property type="chains" value="M=1-255"/>
</dbReference>
<dbReference type="PDB" id="9E8N">
    <property type="method" value="EM"/>
    <property type="resolution" value="3.62 A"/>
    <property type="chains" value="M=1-255"/>
</dbReference>
<dbReference type="PDB" id="9E8O">
    <property type="method" value="EM"/>
    <property type="resolution" value="3.10 A"/>
    <property type="chains" value="M=1-255"/>
</dbReference>
<dbReference type="PDB" id="9E8Q">
    <property type="method" value="EM"/>
    <property type="resolution" value="3.16 A"/>
    <property type="chains" value="M=1-255"/>
</dbReference>
<dbReference type="PDB" id="9HMN">
    <property type="method" value="EM"/>
    <property type="resolution" value="2.55 A"/>
    <property type="chains" value="G/T=2-255"/>
</dbReference>
<dbReference type="PDBsum" id="4R3O"/>
<dbReference type="PDBsum" id="4R67"/>
<dbReference type="PDBsum" id="5A0Q"/>
<dbReference type="PDBsum" id="5DSV"/>
<dbReference type="PDBsum" id="5GJQ"/>
<dbReference type="PDBsum" id="5GJR"/>
<dbReference type="PDBsum" id="5L4G"/>
<dbReference type="PDBsum" id="5LE5"/>
<dbReference type="PDBsum" id="5LEX"/>
<dbReference type="PDBsum" id="5LEY"/>
<dbReference type="PDBsum" id="5LEZ"/>
<dbReference type="PDBsum" id="5LF0"/>
<dbReference type="PDBsum" id="5LF1"/>
<dbReference type="PDBsum" id="5LF3"/>
<dbReference type="PDBsum" id="5LF4"/>
<dbReference type="PDBsum" id="5LF6"/>
<dbReference type="PDBsum" id="5LF7"/>
<dbReference type="PDBsum" id="5LN3"/>
<dbReference type="PDBsum" id="5M32"/>
<dbReference type="PDBsum" id="5T0C"/>
<dbReference type="PDBsum" id="5T0G"/>
<dbReference type="PDBsum" id="5T0H"/>
<dbReference type="PDBsum" id="5T0I"/>
<dbReference type="PDBsum" id="5T0J"/>
<dbReference type="PDBsum" id="5VFO"/>
<dbReference type="PDBsum" id="5VFP"/>
<dbReference type="PDBsum" id="5VFQ"/>
<dbReference type="PDBsum" id="5VFR"/>
<dbReference type="PDBsum" id="5VFS"/>
<dbReference type="PDBsum" id="5VFT"/>
<dbReference type="PDBsum" id="5VFU"/>
<dbReference type="PDBsum" id="6AVO"/>
<dbReference type="PDBsum" id="6E5B"/>
<dbReference type="PDBsum" id="6KWY"/>
<dbReference type="PDBsum" id="6MSB"/>
<dbReference type="PDBsum" id="6MSD"/>
<dbReference type="PDBsum" id="6MSE"/>
<dbReference type="PDBsum" id="6MSG"/>
<dbReference type="PDBsum" id="6MSH"/>
<dbReference type="PDBsum" id="6MSJ"/>
<dbReference type="PDBsum" id="6MSK"/>
<dbReference type="PDBsum" id="6R70"/>
<dbReference type="PDBsum" id="6REY"/>
<dbReference type="PDBsum" id="6RGQ"/>
<dbReference type="PDBsum" id="6WJD"/>
<dbReference type="PDBsum" id="6WJN"/>
<dbReference type="PDBsum" id="6XMJ"/>
<dbReference type="PDBsum" id="7AWE"/>
<dbReference type="PDBsum" id="7B12"/>
<dbReference type="PDBsum" id="7E55"/>
<dbReference type="PDBsum" id="7LXV"/>
<dbReference type="PDBsum" id="7NAN"/>
<dbReference type="PDBsum" id="7NAO"/>
<dbReference type="PDBsum" id="7NAP"/>
<dbReference type="PDBsum" id="7NAQ"/>
<dbReference type="PDBsum" id="7NHT"/>
<dbReference type="PDBsum" id="7PG9"/>
<dbReference type="PDBsum" id="7QXN"/>
<dbReference type="PDBsum" id="7QXP"/>
<dbReference type="PDBsum" id="7QXU"/>
<dbReference type="PDBsum" id="7QXW"/>
<dbReference type="PDBsum" id="7QXX"/>
<dbReference type="PDBsum" id="7QY7"/>
<dbReference type="PDBsum" id="7QYA"/>
<dbReference type="PDBsum" id="7QYB"/>
<dbReference type="PDBsum" id="7V5G"/>
<dbReference type="PDBsum" id="7V5M"/>
<dbReference type="PDBsum" id="7W37"/>
<dbReference type="PDBsum" id="7W38"/>
<dbReference type="PDBsum" id="7W39"/>
<dbReference type="PDBsum" id="7W3A"/>
<dbReference type="PDBsum" id="7W3B"/>
<dbReference type="PDBsum" id="7W3C"/>
<dbReference type="PDBsum" id="7W3F"/>
<dbReference type="PDBsum" id="7W3G"/>
<dbReference type="PDBsum" id="7W3H"/>
<dbReference type="PDBsum" id="7W3I"/>
<dbReference type="PDBsum" id="7W3J"/>
<dbReference type="PDBsum" id="7W3K"/>
<dbReference type="PDBsum" id="7W3M"/>
<dbReference type="PDBsum" id="8BZL"/>
<dbReference type="PDBsum" id="8CVR"/>
<dbReference type="PDBsum" id="8CVS"/>
<dbReference type="PDBsum" id="8CVT"/>
<dbReference type="PDBsum" id="8CXB"/>
<dbReference type="PDBsum" id="8JRI"/>
<dbReference type="PDBsum" id="8JRT"/>
<dbReference type="PDBsum" id="8JTI"/>
<dbReference type="PDBsum" id="8K0G"/>
<dbReference type="PDBsum" id="8QYJ"/>
<dbReference type="PDBsum" id="8QYL"/>
<dbReference type="PDBsum" id="8QYM"/>
<dbReference type="PDBsum" id="8QYN"/>
<dbReference type="PDBsum" id="8QYO"/>
<dbReference type="PDBsum" id="8QYS"/>
<dbReference type="PDBsum" id="8QZ9"/>
<dbReference type="PDBsum" id="8TM3"/>
<dbReference type="PDBsum" id="8TM4"/>
<dbReference type="PDBsum" id="8TM5"/>
<dbReference type="PDBsum" id="8TM6"/>
<dbReference type="PDBsum" id="8UD9"/>
<dbReference type="PDBsum" id="8USB"/>
<dbReference type="PDBsum" id="8USC"/>
<dbReference type="PDBsum" id="8YIX"/>
<dbReference type="PDBsum" id="8YIY"/>
<dbReference type="PDBsum" id="8YIZ"/>
<dbReference type="PDBsum" id="9E8G"/>
<dbReference type="PDBsum" id="9E8H"/>
<dbReference type="PDBsum" id="9E8I"/>
<dbReference type="PDBsum" id="9E8J"/>
<dbReference type="PDBsum" id="9E8K"/>
<dbReference type="PDBsum" id="9E8L"/>
<dbReference type="PDBsum" id="9E8N"/>
<dbReference type="PDBsum" id="9E8O"/>
<dbReference type="PDBsum" id="9E8Q"/>
<dbReference type="PDBsum" id="9HMN"/>
<dbReference type="EMDB" id="EMD-0781"/>
<dbReference type="EMDB" id="EMD-12341"/>
<dbReference type="EMDB" id="EMD-13389"/>
<dbReference type="EMDB" id="EMD-14201"/>
<dbReference type="EMDB" id="EMD-14202"/>
<dbReference type="EMDB" id="EMD-14203"/>
<dbReference type="EMDB" id="EMD-14204"/>
<dbReference type="EMDB" id="EMD-14205"/>
<dbReference type="EMDB" id="EMD-14209"/>
<dbReference type="EMDB" id="EMD-14210"/>
<dbReference type="EMDB" id="EMD-14211"/>
<dbReference type="EMDB" id="EMD-18755"/>
<dbReference type="EMDB" id="EMD-18757"/>
<dbReference type="EMDB" id="EMD-18758"/>
<dbReference type="EMDB" id="EMD-18759"/>
<dbReference type="EMDB" id="EMD-18760"/>
<dbReference type="EMDB" id="EMD-18761"/>
<dbReference type="EMDB" id="EMD-18773"/>
<dbReference type="EMDB" id="EMD-21691"/>
<dbReference type="EMDB" id="EMD-21696"/>
<dbReference type="EMDB" id="EMD-22259"/>
<dbReference type="EMDB" id="EMD-23576"/>
<dbReference type="EMDB" id="EMD-24275"/>
<dbReference type="EMDB" id="EMD-24276"/>
<dbReference type="EMDB" id="EMD-24277"/>
<dbReference type="EMDB" id="EMD-24278"/>
<dbReference type="EMDB" id="EMD-27013"/>
<dbReference type="EMDB" id="EMD-27015"/>
<dbReference type="EMDB" id="EMD-27018"/>
<dbReference type="EMDB" id="EMD-2981"/>
<dbReference type="EMDB" id="EMD-30990"/>
<dbReference type="EMDB" id="EMD-31724"/>
<dbReference type="EMDB" id="EMD-31727"/>
<dbReference type="EMDB" id="EMD-32272"/>
<dbReference type="EMDB" id="EMD-32273"/>
<dbReference type="EMDB" id="EMD-32274"/>
<dbReference type="EMDB" id="EMD-32275"/>
<dbReference type="EMDB" id="EMD-32276"/>
<dbReference type="EMDB" id="EMD-32277"/>
<dbReference type="EMDB" id="EMD-32278"/>
<dbReference type="EMDB" id="EMD-32279"/>
<dbReference type="EMDB" id="EMD-32280"/>
<dbReference type="EMDB" id="EMD-32281"/>
<dbReference type="EMDB" id="EMD-32282"/>
<dbReference type="EMDB" id="EMD-32283"/>
<dbReference type="EMDB" id="EMD-32284"/>
<dbReference type="EMDB" id="EMD-36598"/>
<dbReference type="EMDB" id="EMD-36605"/>
<dbReference type="EMDB" id="EMD-36645"/>
<dbReference type="EMDB" id="EMD-36764"/>
<dbReference type="EMDB" id="EMD-39332"/>
<dbReference type="EMDB" id="EMD-39333"/>
<dbReference type="EMDB" id="EMD-39334"/>
<dbReference type="EMDB" id="EMD-4089"/>
<dbReference type="EMDB" id="EMD-41377"/>
<dbReference type="EMDB" id="EMD-41378"/>
<dbReference type="EMDB" id="EMD-41379"/>
<dbReference type="EMDB" id="EMD-41380"/>
<dbReference type="EMDB" id="EMD-4146"/>
<dbReference type="EMDB" id="EMD-42148"/>
<dbReference type="EMDB" id="EMD-42506"/>
<dbReference type="EMDB" id="EMD-42507"/>
<dbReference type="EMDB" id="EMD-4738"/>
<dbReference type="EMDB" id="EMD-47719"/>
<dbReference type="EMDB" id="EMD-47720"/>
<dbReference type="EMDB" id="EMD-47721"/>
<dbReference type="EMDB" id="EMD-47722"/>
<dbReference type="EMDB" id="EMD-47723"/>
<dbReference type="EMDB" id="EMD-47724"/>
<dbReference type="EMDB" id="EMD-47725"/>
<dbReference type="EMDB" id="EMD-47726"/>
<dbReference type="EMDB" id="EMD-47727"/>
<dbReference type="EMDB" id="EMD-4860"/>
<dbReference type="EMDB" id="EMD-4877"/>
<dbReference type="EMDB" id="EMD-52296"/>
<dbReference type="EMDB" id="EMD-60138"/>
<dbReference type="EMDB" id="EMD-60139"/>
<dbReference type="EMDB" id="EMD-7010"/>
<dbReference type="EMDB" id="EMD-8662"/>
<dbReference type="EMDB" id="EMD-8663"/>
<dbReference type="EMDB" id="EMD-8664"/>
<dbReference type="EMDB" id="EMD-8665"/>
<dbReference type="EMDB" id="EMD-8666"/>
<dbReference type="EMDB" id="EMD-8667"/>
<dbReference type="EMDB" id="EMD-8668"/>
<dbReference type="EMDB" id="EMD-9216"/>
<dbReference type="EMDB" id="EMD-9217"/>
<dbReference type="EMDB" id="EMD-9218"/>
<dbReference type="EMDB" id="EMD-9219"/>
<dbReference type="EMDB" id="EMD-9220"/>
<dbReference type="EMDB" id="EMD-9221"/>
<dbReference type="EMDB" id="EMD-9222"/>
<dbReference type="EMDB" id="EMD-9511"/>
<dbReference type="EMDB" id="EMD-9512"/>
<dbReference type="SMR" id="P25788"/>
<dbReference type="BioGRID" id="111657">
    <property type="interactions" value="463"/>
</dbReference>
<dbReference type="ComplexPortal" id="CPX-5993">
    <property type="entry name" value="26S proteasome complex"/>
</dbReference>
<dbReference type="ComplexPortal" id="CPX-8806">
    <property type="entry name" value="20S proteasome complex"/>
</dbReference>
<dbReference type="ComplexPortal" id="CPX-8841">
    <property type="entry name" value="PA200-20S single-capped proteasome"/>
</dbReference>
<dbReference type="ComplexPortal" id="CPX-8842">
    <property type="entry name" value="PA28-alphabeta double-capped 20S proteasome complex"/>
</dbReference>
<dbReference type="ComplexPortal" id="CPX-9001">
    <property type="entry name" value="PA28-gamma single-capped 20S proteasome complex"/>
</dbReference>
<dbReference type="ComplexPortal" id="CPX-9002">
    <property type="entry name" value="PA28-alphabeta single-capped 20S proteasome complex"/>
</dbReference>
<dbReference type="ComplexPortal" id="CPX-9003">
    <property type="entry name" value="20S immunoproteasome complex"/>
</dbReference>
<dbReference type="ComplexPortal" id="CPX-9004">
    <property type="entry name" value="20S thymoproteasome complex"/>
</dbReference>
<dbReference type="ComplexPortal" id="CPX-9021">
    <property type="entry name" value="20S spermatoproteasome complex"/>
</dbReference>
<dbReference type="ComplexPortal" id="CPX-9022">
    <property type="entry name" value="PA28-gamma double-capped 20S proteasome complex"/>
</dbReference>
<dbReference type="ComplexPortal" id="CPX-9063">
    <property type="entry name" value="PA200-20S-PA200 double-capped proteasome complex"/>
</dbReference>
<dbReference type="ComplexPortal" id="CPX-9082">
    <property type="entry name" value="19S-20S-PA28-alphabeta hybrid proteasome complex"/>
</dbReference>
<dbReference type="ComplexPortal" id="CPX-9085">
    <property type="entry name" value="19S-20S-PA28-gamma hybrid proteasome complex"/>
</dbReference>
<dbReference type="ComplexPortal" id="CPX-9086">
    <property type="entry name" value="30S proteasome complex"/>
</dbReference>
<dbReference type="CORUM" id="P25788"/>
<dbReference type="DIP" id="DIP-29366N"/>
<dbReference type="FunCoup" id="P25788">
    <property type="interactions" value="2469"/>
</dbReference>
<dbReference type="IntAct" id="P25788">
    <property type="interactions" value="164"/>
</dbReference>
<dbReference type="MINT" id="P25788"/>
<dbReference type="STRING" id="9606.ENSP00000216455"/>
<dbReference type="BindingDB" id="P25788"/>
<dbReference type="ChEMBL" id="CHEMBL2364701"/>
<dbReference type="DrugBank" id="DB08515">
    <property type="generic name" value="(3AR,6R,6AS)-6-((S)-((S)-CYCLOHEX-2-ENYL)(HYDROXY)METHYL)-6A-METHYL-4-OXO-HEXAHYDRO-2H-FURO[3,2-C]PYRROLE-6-CARBALDEHYDE"/>
</dbReference>
<dbReference type="DrugBank" id="DB12695">
    <property type="generic name" value="Phenethyl Isothiocyanate"/>
</dbReference>
<dbReference type="MEROPS" id="T01.977"/>
<dbReference type="MoonDB" id="P25788">
    <property type="type" value="Predicted"/>
</dbReference>
<dbReference type="GlyGen" id="P25788">
    <property type="glycosylation" value="2 sites, 1 N-linked glycan (1 site), 1 O-linked glycan (1 site)"/>
</dbReference>
<dbReference type="iPTMnet" id="P25788"/>
<dbReference type="MetOSite" id="P25788"/>
<dbReference type="PhosphoSitePlus" id="P25788"/>
<dbReference type="SwissPalm" id="P25788"/>
<dbReference type="BioMuta" id="PSMA3"/>
<dbReference type="DMDM" id="130859"/>
<dbReference type="OGP" id="P25788"/>
<dbReference type="REPRODUCTION-2DPAGE" id="IPI00171199"/>
<dbReference type="jPOST" id="P25788"/>
<dbReference type="MassIVE" id="P25788"/>
<dbReference type="PaxDb" id="9606-ENSP00000216455"/>
<dbReference type="PeptideAtlas" id="P25788"/>
<dbReference type="ProteomicsDB" id="54290">
    <molecule id="P25788-1"/>
</dbReference>
<dbReference type="ProteomicsDB" id="54291">
    <molecule id="P25788-2"/>
</dbReference>
<dbReference type="Pumba" id="P25788"/>
<dbReference type="Antibodypedia" id="80">
    <property type="antibodies" value="307 antibodies from 35 providers"/>
</dbReference>
<dbReference type="DNASU" id="5684"/>
<dbReference type="Ensembl" id="ENST00000216455.9">
    <molecule id="P25788-1"/>
    <property type="protein sequence ID" value="ENSP00000216455.4"/>
    <property type="gene ID" value="ENSG00000100567.13"/>
</dbReference>
<dbReference type="Ensembl" id="ENST00000412908.6">
    <molecule id="P25788-2"/>
    <property type="protein sequence ID" value="ENSP00000390491.2"/>
    <property type="gene ID" value="ENSG00000100567.13"/>
</dbReference>
<dbReference type="GeneID" id="5684"/>
<dbReference type="KEGG" id="hsa:5684"/>
<dbReference type="MANE-Select" id="ENST00000216455.9">
    <property type="protein sequence ID" value="ENSP00000216455.4"/>
    <property type="RefSeq nucleotide sequence ID" value="NM_002788.4"/>
    <property type="RefSeq protein sequence ID" value="NP_002779.1"/>
</dbReference>
<dbReference type="UCSC" id="uc001xdj.3">
    <molecule id="P25788-1"/>
    <property type="organism name" value="human"/>
</dbReference>
<dbReference type="AGR" id="HGNC:9532"/>
<dbReference type="CTD" id="5684"/>
<dbReference type="DisGeNET" id="5684"/>
<dbReference type="GeneCards" id="PSMA3"/>
<dbReference type="HGNC" id="HGNC:9532">
    <property type="gene designation" value="PSMA3"/>
</dbReference>
<dbReference type="HPA" id="ENSG00000100567">
    <property type="expression patterns" value="Low tissue specificity"/>
</dbReference>
<dbReference type="MalaCards" id="PSMA3"/>
<dbReference type="MIM" id="176843">
    <property type="type" value="gene"/>
</dbReference>
<dbReference type="MIM" id="176845">
    <property type="type" value="gene"/>
</dbReference>
<dbReference type="neXtProt" id="NX_P25788"/>
<dbReference type="OpenTargets" id="ENSG00000100567"/>
<dbReference type="PharmGKB" id="PA33877"/>
<dbReference type="VEuPathDB" id="HostDB:ENSG00000100567"/>
<dbReference type="eggNOG" id="KOG0184">
    <property type="taxonomic scope" value="Eukaryota"/>
</dbReference>
<dbReference type="GeneTree" id="ENSGT00550000074912"/>
<dbReference type="HOGENOM" id="CLU_035750_0_0_1"/>
<dbReference type="InParanoid" id="P25788"/>
<dbReference type="OMA" id="RVSMYMH"/>
<dbReference type="OrthoDB" id="40134at2759"/>
<dbReference type="PAN-GO" id="P25788">
    <property type="GO annotations" value="5 GO annotations based on evolutionary models"/>
</dbReference>
<dbReference type="PhylomeDB" id="P25788"/>
<dbReference type="TreeFam" id="TF106208"/>
<dbReference type="PathwayCommons" id="P25788"/>
<dbReference type="Reactome" id="R-HSA-1169091">
    <property type="pathway name" value="Activation of NF-kappaB in B cells"/>
</dbReference>
<dbReference type="Reactome" id="R-HSA-1234176">
    <property type="pathway name" value="Oxygen-dependent proline hydroxylation of Hypoxia-inducible Factor Alpha"/>
</dbReference>
<dbReference type="Reactome" id="R-HSA-1236974">
    <property type="pathway name" value="ER-Phagosome pathway"/>
</dbReference>
<dbReference type="Reactome" id="R-HSA-1236978">
    <property type="pathway name" value="Cross-presentation of soluble exogenous antigens (endosomes)"/>
</dbReference>
<dbReference type="Reactome" id="R-HSA-174084">
    <property type="pathway name" value="Autodegradation of Cdh1 by Cdh1:APC/C"/>
</dbReference>
<dbReference type="Reactome" id="R-HSA-174113">
    <property type="pathway name" value="SCF-beta-TrCP mediated degradation of Emi1"/>
</dbReference>
<dbReference type="Reactome" id="R-HSA-174154">
    <property type="pathway name" value="APC/C:Cdc20 mediated degradation of Securin"/>
</dbReference>
<dbReference type="Reactome" id="R-HSA-174178">
    <property type="pathway name" value="APC/C:Cdh1 mediated degradation of Cdc20 and other APC/C:Cdh1 targeted proteins in late mitosis/early G1"/>
</dbReference>
<dbReference type="Reactome" id="R-HSA-174184">
    <property type="pathway name" value="Cdc20:Phospho-APC/C mediated degradation of Cyclin A"/>
</dbReference>
<dbReference type="Reactome" id="R-HSA-180534">
    <property type="pathway name" value="Vpu mediated degradation of CD4"/>
</dbReference>
<dbReference type="Reactome" id="R-HSA-180585">
    <property type="pathway name" value="Vif-mediated degradation of APOBEC3G"/>
</dbReference>
<dbReference type="Reactome" id="R-HSA-187577">
    <property type="pathway name" value="SCF(Skp2)-mediated degradation of p27/p21"/>
</dbReference>
<dbReference type="Reactome" id="R-HSA-195253">
    <property type="pathway name" value="Degradation of beta-catenin by the destruction complex"/>
</dbReference>
<dbReference type="Reactome" id="R-HSA-202424">
    <property type="pathway name" value="Downstream TCR signaling"/>
</dbReference>
<dbReference type="Reactome" id="R-HSA-211733">
    <property type="pathway name" value="Regulation of activated PAK-2p34 by proteasome mediated degradation"/>
</dbReference>
<dbReference type="Reactome" id="R-HSA-2467813">
    <property type="pathway name" value="Separation of Sister Chromatids"/>
</dbReference>
<dbReference type="Reactome" id="R-HSA-2871837">
    <property type="pathway name" value="FCERI mediated NF-kB activation"/>
</dbReference>
<dbReference type="Reactome" id="R-HSA-349425">
    <property type="pathway name" value="Autodegradation of the E3 ubiquitin ligase COP1"/>
</dbReference>
<dbReference type="Reactome" id="R-HSA-350562">
    <property type="pathway name" value="Regulation of ornithine decarboxylase (ODC)"/>
</dbReference>
<dbReference type="Reactome" id="R-HSA-382556">
    <property type="pathway name" value="ABC-family proteins mediated transport"/>
</dbReference>
<dbReference type="Reactome" id="R-HSA-450408">
    <property type="pathway name" value="AUF1 (hnRNP D0) binds and destabilizes mRNA"/>
</dbReference>
<dbReference type="Reactome" id="R-HSA-4608870">
    <property type="pathway name" value="Asymmetric localization of PCP proteins"/>
</dbReference>
<dbReference type="Reactome" id="R-HSA-4641257">
    <property type="pathway name" value="Degradation of AXIN"/>
</dbReference>
<dbReference type="Reactome" id="R-HSA-4641258">
    <property type="pathway name" value="Degradation of DVL"/>
</dbReference>
<dbReference type="Reactome" id="R-HSA-5358346">
    <property type="pathway name" value="Hedgehog ligand biogenesis"/>
</dbReference>
<dbReference type="Reactome" id="R-HSA-5362768">
    <property type="pathway name" value="Hh mutants are degraded by ERAD"/>
</dbReference>
<dbReference type="Reactome" id="R-HSA-5607761">
    <property type="pathway name" value="Dectin-1 mediated noncanonical NF-kB signaling"/>
</dbReference>
<dbReference type="Reactome" id="R-HSA-5607764">
    <property type="pathway name" value="CLEC7A (Dectin-1) signaling"/>
</dbReference>
<dbReference type="Reactome" id="R-HSA-5610780">
    <property type="pathway name" value="Degradation of GLI1 by the proteasome"/>
</dbReference>
<dbReference type="Reactome" id="R-HSA-5610783">
    <property type="pathway name" value="Degradation of GLI2 by the proteasome"/>
</dbReference>
<dbReference type="Reactome" id="R-HSA-5610785">
    <property type="pathway name" value="GLI3 is processed to GLI3R by the proteasome"/>
</dbReference>
<dbReference type="Reactome" id="R-HSA-5632684">
    <property type="pathway name" value="Hedgehog 'on' state"/>
</dbReference>
<dbReference type="Reactome" id="R-HSA-5658442">
    <property type="pathway name" value="Regulation of RAS by GAPs"/>
</dbReference>
<dbReference type="Reactome" id="R-HSA-5668541">
    <property type="pathway name" value="TNFR2 non-canonical NF-kB pathway"/>
</dbReference>
<dbReference type="Reactome" id="R-HSA-5676590">
    <property type="pathway name" value="NIK--&gt;noncanonical NF-kB signaling"/>
</dbReference>
<dbReference type="Reactome" id="R-HSA-5678895">
    <property type="pathway name" value="Defective CFTR causes cystic fibrosis"/>
</dbReference>
<dbReference type="Reactome" id="R-HSA-5687128">
    <property type="pathway name" value="MAPK6/MAPK4 signaling"/>
</dbReference>
<dbReference type="Reactome" id="R-HSA-5689603">
    <property type="pathway name" value="UCH proteinases"/>
</dbReference>
<dbReference type="Reactome" id="R-HSA-5689880">
    <property type="pathway name" value="Ub-specific processing proteases"/>
</dbReference>
<dbReference type="Reactome" id="R-HSA-68867">
    <property type="pathway name" value="Assembly of the pre-replicative complex"/>
</dbReference>
<dbReference type="Reactome" id="R-HSA-68949">
    <property type="pathway name" value="Orc1 removal from chromatin"/>
</dbReference>
<dbReference type="Reactome" id="R-HSA-69017">
    <property type="pathway name" value="CDK-mediated phosphorylation and removal of Cdc6"/>
</dbReference>
<dbReference type="Reactome" id="R-HSA-69481">
    <property type="pathway name" value="G2/M Checkpoints"/>
</dbReference>
<dbReference type="Reactome" id="R-HSA-69601">
    <property type="pathway name" value="Ubiquitin Mediated Degradation of Phosphorylated Cdc25A"/>
</dbReference>
<dbReference type="Reactome" id="R-HSA-75815">
    <property type="pathway name" value="Ubiquitin-dependent degradation of Cyclin D"/>
</dbReference>
<dbReference type="Reactome" id="R-HSA-8852276">
    <property type="pathway name" value="The role of GTSE1 in G2/M progression after G2 checkpoint"/>
</dbReference>
<dbReference type="Reactome" id="R-HSA-8854050">
    <property type="pathway name" value="FBXL7 down-regulates AURKA during mitotic entry and in early mitosis"/>
</dbReference>
<dbReference type="Reactome" id="R-HSA-8939236">
    <property type="pathway name" value="RUNX1 regulates transcription of genes involved in differentiation of HSCs"/>
</dbReference>
<dbReference type="Reactome" id="R-HSA-8939902">
    <property type="pathway name" value="Regulation of RUNX2 expression and activity"/>
</dbReference>
<dbReference type="Reactome" id="R-HSA-8941858">
    <property type="pathway name" value="Regulation of RUNX3 expression and activity"/>
</dbReference>
<dbReference type="Reactome" id="R-HSA-8948751">
    <property type="pathway name" value="Regulation of PTEN stability and activity"/>
</dbReference>
<dbReference type="Reactome" id="R-HSA-8951664">
    <property type="pathway name" value="Neddylation"/>
</dbReference>
<dbReference type="Reactome" id="R-HSA-9010553">
    <property type="pathway name" value="Regulation of expression of SLITs and ROBOs"/>
</dbReference>
<dbReference type="Reactome" id="R-HSA-9020702">
    <property type="pathway name" value="Interleukin-1 signaling"/>
</dbReference>
<dbReference type="Reactome" id="R-HSA-9604323">
    <property type="pathway name" value="Negative regulation of NOTCH4 signaling"/>
</dbReference>
<dbReference type="Reactome" id="R-HSA-9755511">
    <property type="pathway name" value="KEAP1-NFE2L2 pathway"/>
</dbReference>
<dbReference type="Reactome" id="R-HSA-9762114">
    <property type="pathway name" value="GSK3B and BTRC:CUL1-mediated-degradation of NFE2L2"/>
</dbReference>
<dbReference type="Reactome" id="R-HSA-9824272">
    <property type="pathway name" value="Somitogenesis"/>
</dbReference>
<dbReference type="Reactome" id="R-HSA-983168">
    <property type="pathway name" value="Antigen processing: Ubiquitination &amp; Proteasome degradation"/>
</dbReference>
<dbReference type="Reactome" id="R-HSA-9907900">
    <property type="pathway name" value="Proteasome assembly"/>
</dbReference>
<dbReference type="SignaLink" id="P25788"/>
<dbReference type="SIGNOR" id="P25788"/>
<dbReference type="BioGRID-ORCS" id="5684">
    <property type="hits" value="838 hits in 1179 CRISPR screens"/>
</dbReference>
<dbReference type="CD-CODE" id="804901D1">
    <property type="entry name" value="Nuclear speckle"/>
</dbReference>
<dbReference type="ChiTaRS" id="PSMA3">
    <property type="organism name" value="human"/>
</dbReference>
<dbReference type="EvolutionaryTrace" id="P25788"/>
<dbReference type="GeneWiki" id="PSMA3"/>
<dbReference type="GenomeRNAi" id="5684"/>
<dbReference type="Pharos" id="P25788">
    <property type="development level" value="Tbio"/>
</dbReference>
<dbReference type="PRO" id="PR:P25788"/>
<dbReference type="Proteomes" id="UP000005640">
    <property type="component" value="Chromosome 14"/>
</dbReference>
<dbReference type="RNAct" id="P25788">
    <property type="molecule type" value="protein"/>
</dbReference>
<dbReference type="Bgee" id="ENSG00000100567">
    <property type="expression patterns" value="Expressed in adrenal tissue and 208 other cell types or tissues"/>
</dbReference>
<dbReference type="ExpressionAtlas" id="P25788">
    <property type="expression patterns" value="baseline and differential"/>
</dbReference>
<dbReference type="GO" id="GO:0005737">
    <property type="term" value="C:cytoplasm"/>
    <property type="evidence" value="ECO:0000314"/>
    <property type="project" value="UniProtKB"/>
</dbReference>
<dbReference type="GO" id="GO:0005829">
    <property type="term" value="C:cytosol"/>
    <property type="evidence" value="ECO:0000304"/>
    <property type="project" value="Reactome"/>
</dbReference>
<dbReference type="GO" id="GO:0070062">
    <property type="term" value="C:extracellular exosome"/>
    <property type="evidence" value="ECO:0007005"/>
    <property type="project" value="UniProtKB"/>
</dbReference>
<dbReference type="GO" id="GO:0005654">
    <property type="term" value="C:nucleoplasm"/>
    <property type="evidence" value="ECO:0000304"/>
    <property type="project" value="Reactome"/>
</dbReference>
<dbReference type="GO" id="GO:0005634">
    <property type="term" value="C:nucleus"/>
    <property type="evidence" value="ECO:0000314"/>
    <property type="project" value="UniProtKB"/>
</dbReference>
<dbReference type="GO" id="GO:0000502">
    <property type="term" value="C:proteasome complex"/>
    <property type="evidence" value="ECO:0000314"/>
    <property type="project" value="UniProtKB"/>
</dbReference>
<dbReference type="GO" id="GO:0005839">
    <property type="term" value="C:proteasome core complex"/>
    <property type="evidence" value="ECO:0000314"/>
    <property type="project" value="UniProtKB"/>
</dbReference>
<dbReference type="GO" id="GO:0019773">
    <property type="term" value="C:proteasome core complex, alpha-subunit complex"/>
    <property type="evidence" value="ECO:0000250"/>
    <property type="project" value="UniProtKB"/>
</dbReference>
<dbReference type="GO" id="GO:0031625">
    <property type="term" value="F:ubiquitin protein ligase binding"/>
    <property type="evidence" value="ECO:0000353"/>
    <property type="project" value="ARUK-UCL"/>
</dbReference>
<dbReference type="GO" id="GO:0043161">
    <property type="term" value="P:proteasome-mediated ubiquitin-dependent protein catabolic process"/>
    <property type="evidence" value="ECO:0000315"/>
    <property type="project" value="UniProtKB"/>
</dbReference>
<dbReference type="CDD" id="cd03751">
    <property type="entry name" value="proteasome_alpha_type_3"/>
    <property type="match status" value="1"/>
</dbReference>
<dbReference type="FunFam" id="3.60.20.10:FF:000077">
    <property type="entry name" value="Proteasome subunit alpha type-3"/>
    <property type="match status" value="1"/>
</dbReference>
<dbReference type="Gene3D" id="3.60.20.10">
    <property type="entry name" value="Glutamine Phosphoribosylpyrophosphate, subunit 1, domain 1"/>
    <property type="match status" value="1"/>
</dbReference>
<dbReference type="InterPro" id="IPR029055">
    <property type="entry name" value="Ntn_hydrolases_N"/>
</dbReference>
<dbReference type="InterPro" id="IPR050115">
    <property type="entry name" value="Proteasome_alpha"/>
</dbReference>
<dbReference type="InterPro" id="IPR023332">
    <property type="entry name" value="Proteasome_alpha-type"/>
</dbReference>
<dbReference type="InterPro" id="IPR000426">
    <property type="entry name" value="Proteasome_asu_N"/>
</dbReference>
<dbReference type="InterPro" id="IPR001353">
    <property type="entry name" value="Proteasome_sua/b"/>
</dbReference>
<dbReference type="PANTHER" id="PTHR11599">
    <property type="entry name" value="PROTEASOME SUBUNIT ALPHA/BETA"/>
    <property type="match status" value="1"/>
</dbReference>
<dbReference type="Pfam" id="PF00227">
    <property type="entry name" value="Proteasome"/>
    <property type="match status" value="1"/>
</dbReference>
<dbReference type="Pfam" id="PF10584">
    <property type="entry name" value="Proteasome_A_N"/>
    <property type="match status" value="1"/>
</dbReference>
<dbReference type="SMART" id="SM00948">
    <property type="entry name" value="Proteasome_A_N"/>
    <property type="match status" value="1"/>
</dbReference>
<dbReference type="SUPFAM" id="SSF56235">
    <property type="entry name" value="N-terminal nucleophile aminohydrolases (Ntn hydrolases)"/>
    <property type="match status" value="1"/>
</dbReference>
<dbReference type="PROSITE" id="PS00388">
    <property type="entry name" value="PROTEASOME_ALPHA_1"/>
    <property type="match status" value="1"/>
</dbReference>
<dbReference type="PROSITE" id="PS51475">
    <property type="entry name" value="PROTEASOME_ALPHA_2"/>
    <property type="match status" value="1"/>
</dbReference>
<keyword id="KW-0002">3D-structure</keyword>
<keyword id="KW-0007">Acetylation</keyword>
<keyword id="KW-0025">Alternative splicing</keyword>
<keyword id="KW-0963">Cytoplasm</keyword>
<keyword id="KW-0903">Direct protein sequencing</keyword>
<keyword id="KW-0945">Host-virus interaction</keyword>
<keyword id="KW-0539">Nucleus</keyword>
<keyword id="KW-0597">Phosphoprotein</keyword>
<keyword id="KW-0647">Proteasome</keyword>
<keyword id="KW-1267">Proteomics identification</keyword>
<keyword id="KW-1185">Reference proteome</keyword>
<proteinExistence type="evidence at protein level"/>
<name>PSA3_HUMAN</name>
<organism>
    <name type="scientific">Homo sapiens</name>
    <name type="common">Human</name>
    <dbReference type="NCBI Taxonomy" id="9606"/>
    <lineage>
        <taxon>Eukaryota</taxon>
        <taxon>Metazoa</taxon>
        <taxon>Chordata</taxon>
        <taxon>Craniata</taxon>
        <taxon>Vertebrata</taxon>
        <taxon>Euteleostomi</taxon>
        <taxon>Mammalia</taxon>
        <taxon>Eutheria</taxon>
        <taxon>Euarchontoglires</taxon>
        <taxon>Primates</taxon>
        <taxon>Haplorrhini</taxon>
        <taxon>Catarrhini</taxon>
        <taxon>Hominidae</taxon>
        <taxon>Homo</taxon>
    </lineage>
</organism>
<protein>
    <recommendedName>
        <fullName evidence="28">Proteasome subunit alpha type-3</fullName>
    </recommendedName>
    <alternativeName>
        <fullName>Macropain subunit C8</fullName>
    </alternativeName>
    <alternativeName>
        <fullName>Multicatalytic endopeptidase complex subunit C8</fullName>
    </alternativeName>
    <alternativeName>
        <fullName>Proteasome component C8</fullName>
    </alternativeName>
    <alternativeName>
        <fullName evidence="26">Proteasome subunit alpha-7</fullName>
        <shortName evidence="26">alpha-7</shortName>
    </alternativeName>
</protein>